<organism>
    <name type="scientific">Homo sapiens</name>
    <name type="common">Human</name>
    <dbReference type="NCBI Taxonomy" id="9606"/>
    <lineage>
        <taxon>Eukaryota</taxon>
        <taxon>Metazoa</taxon>
        <taxon>Chordata</taxon>
        <taxon>Craniata</taxon>
        <taxon>Vertebrata</taxon>
        <taxon>Euteleostomi</taxon>
        <taxon>Mammalia</taxon>
        <taxon>Eutheria</taxon>
        <taxon>Euarchontoglires</taxon>
        <taxon>Primates</taxon>
        <taxon>Haplorrhini</taxon>
        <taxon>Catarrhini</taxon>
        <taxon>Hominidae</taxon>
        <taxon>Homo</taxon>
    </lineage>
</organism>
<name>HXK4_HUMAN</name>
<gene>
    <name evidence="47 51" type="primary">GCK</name>
</gene>
<keyword id="KW-0002">3D-structure</keyword>
<keyword id="KW-0021">Allosteric enzyme</keyword>
<keyword id="KW-0025">Alternative splicing</keyword>
<keyword id="KW-0067">ATP-binding</keyword>
<keyword id="KW-0963">Cytoplasm</keyword>
<keyword id="KW-0219">Diabetes mellitus</keyword>
<keyword id="KW-0225">Disease variant</keyword>
<keyword id="KW-0324">Glycolysis</keyword>
<keyword id="KW-0418">Kinase</keyword>
<keyword id="KW-0496">Mitochondrion</keyword>
<keyword id="KW-0547">Nucleotide-binding</keyword>
<keyword id="KW-0539">Nucleus</keyword>
<keyword id="KW-1267">Proteomics identification</keyword>
<keyword id="KW-1185">Reference proteome</keyword>
<keyword id="KW-0808">Transferase</keyword>
<reference key="1">
    <citation type="journal article" date="1992" name="Mol. Endocrinol.">
        <title>Human glucokinase gene: isolation, structural characterization, and identification of a microsatellite repeat polymorphism.</title>
        <authorList>
            <person name="Tanizawa Y."/>
            <person name="Matsutani A."/>
            <person name="Chiu K.C."/>
            <person name="Permutt M.A."/>
        </authorList>
    </citation>
    <scope>NUCLEOTIDE SEQUENCE [GENOMIC DNA]</scope>
</reference>
<reference key="2">
    <citation type="journal article" date="1991" name="Proc. Natl. Acad. Sci. U.S.A.">
        <title>Human liver glucokinase gene: cloning and sequence determination of two alternatively spliced cDNAs.</title>
        <authorList>
            <person name="Tanizawa Y."/>
            <person name="Koranyi L.I."/>
            <person name="Welling C.M."/>
            <person name="Permutt M.A."/>
        </authorList>
    </citation>
    <scope>NUCLEOTIDE SEQUENCE [MRNA]</scope>
    <scope>VARIANT THR-107</scope>
</reference>
<reference key="3">
    <citation type="journal article" date="1992" name="Diabetologia">
        <title>Human pancreatic beta-cell glucokinase: cDNA sequence and localization of the polymorphic gene to chromosome 7, band p13.</title>
        <authorList>
            <person name="Nishi S."/>
            <person name="Stoffel M."/>
            <person name="Xiang K.S."/>
            <person name="Shows T.B."/>
            <person name="Bell G.I."/>
            <person name="Takeda J."/>
        </authorList>
    </citation>
    <scope>NUCLEOTIDE SEQUENCE [MRNA]</scope>
    <source>
        <tissue>Pancreas</tissue>
    </source>
</reference>
<reference key="4">
    <citation type="journal article" date="1992" name="Diabetes">
        <title>Human islet glucokinase gene. Isolation and sequence analysis of full-length cDNA.</title>
        <authorList>
            <person name="Koranyi L.I."/>
            <person name="Tanizawa Y."/>
            <person name="Welling C.M."/>
            <person name="Rabin D.U."/>
            <person name="Permutt M.A."/>
        </authorList>
    </citation>
    <scope>NUCLEOTIDE SEQUENCE [MRNA]</scope>
    <source>
        <tissue>Pancreas</tissue>
    </source>
</reference>
<reference key="5">
    <citation type="journal article" date="1992" name="Proc. Natl. Acad. Sci. U.S.A.">
        <title>Human glucokinase gene: isolation, characterization, and identification of two missense mutations linked to early-onset non-insulin-dependent (type 2) diabetes mellitus.</title>
        <authorList>
            <person name="Stoffel M."/>
            <person name="Froguel P."/>
            <person name="Takeda J."/>
            <person name="Zouali H."/>
            <person name="Vionnet N."/>
            <person name="Nishi S."/>
            <person name="Weber I.T."/>
            <person name="Harrison R.W."/>
            <person name="Pilkis S.J."/>
            <person name="Lesage S."/>
            <person name="Vaxillaire M."/>
            <person name="Velho G."/>
            <person name="Sun F."/>
            <person name="Iris F."/>
            <person name="Passa P."/>
            <person name="Cohen D."/>
            <person name="Bell G.I."/>
        </authorList>
    </citation>
    <scope>NUCLEOTIDE SEQUENCE [GENOMIC DNA]</scope>
    <scope>VARIANTS MODY2 MET-228 AND ARG-261</scope>
    <source>
        <tissue>Placenta</tissue>
    </source>
</reference>
<reference key="6">
    <citation type="journal article" date="1992" name="Proc. Natl. Acad. Sci. U.S.A.">
        <authorList>
            <person name="Stoffel M."/>
            <person name="Froguel P."/>
            <person name="Takeda J."/>
            <person name="Zouali H."/>
            <person name="Vionnet N."/>
            <person name="Nishi S."/>
            <person name="Weber I.T."/>
            <person name="Harrison R.W."/>
            <person name="Pilkis S.J."/>
            <person name="Lesage S."/>
            <person name="Vaxillaire M."/>
            <person name="Velho G."/>
            <person name="Sun F."/>
            <person name="Iris F."/>
            <person name="Passa P."/>
            <person name="Cohen D."/>
            <person name="Bell G.I."/>
        </authorList>
    </citation>
    <scope>ERRATUM OF PUBMED:1502186</scope>
</reference>
<reference key="7">
    <citation type="journal article" date="1992" name="J. Clin. Endocrinol. Metab.">
        <title>Structure of the human glucokinase gene and identification of a missense mutation in a Japanese patient with early-onset non-insulin-dependent diabetes mellitus.</title>
        <authorList>
            <person name="Sakura H."/>
            <person name="Eto K."/>
            <person name="Kadowaki H."/>
            <person name="Simokawa K."/>
            <person name="Ueno H."/>
            <person name="Koda N."/>
            <person name="Fukushima Y."/>
            <person name="Akanuma Y."/>
            <person name="Yazaki Y."/>
            <person name="Kadowaki T."/>
        </authorList>
    </citation>
    <scope>NUCLEOTIDE SEQUENCE [GENOMIC DNA]</scope>
    <scope>VARIANT THR-107</scope>
    <scope>VARIANT MODY2 ARG-261</scope>
</reference>
<reference key="8">
    <citation type="journal article" date="2004" name="Nat. Genet.">
        <title>Complete sequencing and characterization of 21,243 full-length human cDNAs.</title>
        <authorList>
            <person name="Ota T."/>
            <person name="Suzuki Y."/>
            <person name="Nishikawa T."/>
            <person name="Otsuki T."/>
            <person name="Sugiyama T."/>
            <person name="Irie R."/>
            <person name="Wakamatsu A."/>
            <person name="Hayashi K."/>
            <person name="Sato H."/>
            <person name="Nagai K."/>
            <person name="Kimura K."/>
            <person name="Makita H."/>
            <person name="Sekine M."/>
            <person name="Obayashi M."/>
            <person name="Nishi T."/>
            <person name="Shibahara T."/>
            <person name="Tanaka T."/>
            <person name="Ishii S."/>
            <person name="Yamamoto J."/>
            <person name="Saito K."/>
            <person name="Kawai Y."/>
            <person name="Isono Y."/>
            <person name="Nakamura Y."/>
            <person name="Nagahari K."/>
            <person name="Murakami K."/>
            <person name="Yasuda T."/>
            <person name="Iwayanagi T."/>
            <person name="Wagatsuma M."/>
            <person name="Shiratori A."/>
            <person name="Sudo H."/>
            <person name="Hosoiri T."/>
            <person name="Kaku Y."/>
            <person name="Kodaira H."/>
            <person name="Kondo H."/>
            <person name="Sugawara M."/>
            <person name="Takahashi M."/>
            <person name="Kanda K."/>
            <person name="Yokoi T."/>
            <person name="Furuya T."/>
            <person name="Kikkawa E."/>
            <person name="Omura Y."/>
            <person name="Abe K."/>
            <person name="Kamihara K."/>
            <person name="Katsuta N."/>
            <person name="Sato K."/>
            <person name="Tanikawa M."/>
            <person name="Yamazaki M."/>
            <person name="Ninomiya K."/>
            <person name="Ishibashi T."/>
            <person name="Yamashita H."/>
            <person name="Murakawa K."/>
            <person name="Fujimori K."/>
            <person name="Tanai H."/>
            <person name="Kimata M."/>
            <person name="Watanabe M."/>
            <person name="Hiraoka S."/>
            <person name="Chiba Y."/>
            <person name="Ishida S."/>
            <person name="Ono Y."/>
            <person name="Takiguchi S."/>
            <person name="Watanabe S."/>
            <person name="Yosida M."/>
            <person name="Hotuta T."/>
            <person name="Kusano J."/>
            <person name="Kanehori K."/>
            <person name="Takahashi-Fujii A."/>
            <person name="Hara H."/>
            <person name="Tanase T.-O."/>
            <person name="Nomura Y."/>
            <person name="Togiya S."/>
            <person name="Komai F."/>
            <person name="Hara R."/>
            <person name="Takeuchi K."/>
            <person name="Arita M."/>
            <person name="Imose N."/>
            <person name="Musashino K."/>
            <person name="Yuuki H."/>
            <person name="Oshima A."/>
            <person name="Sasaki N."/>
            <person name="Aotsuka S."/>
            <person name="Yoshikawa Y."/>
            <person name="Matsunawa H."/>
            <person name="Ichihara T."/>
            <person name="Shiohata N."/>
            <person name="Sano S."/>
            <person name="Moriya S."/>
            <person name="Momiyama H."/>
            <person name="Satoh N."/>
            <person name="Takami S."/>
            <person name="Terashima Y."/>
            <person name="Suzuki O."/>
            <person name="Nakagawa S."/>
            <person name="Senoh A."/>
            <person name="Mizoguchi H."/>
            <person name="Goto Y."/>
            <person name="Shimizu F."/>
            <person name="Wakebe H."/>
            <person name="Hishigaki H."/>
            <person name="Watanabe T."/>
            <person name="Sugiyama A."/>
            <person name="Takemoto M."/>
            <person name="Kawakami B."/>
            <person name="Yamazaki M."/>
            <person name="Watanabe K."/>
            <person name="Kumagai A."/>
            <person name="Itakura S."/>
            <person name="Fukuzumi Y."/>
            <person name="Fujimori Y."/>
            <person name="Komiyama M."/>
            <person name="Tashiro H."/>
            <person name="Tanigami A."/>
            <person name="Fujiwara T."/>
            <person name="Ono T."/>
            <person name="Yamada K."/>
            <person name="Fujii Y."/>
            <person name="Ozaki K."/>
            <person name="Hirao M."/>
            <person name="Ohmori Y."/>
            <person name="Kawabata A."/>
            <person name="Hikiji T."/>
            <person name="Kobatake N."/>
            <person name="Inagaki H."/>
            <person name="Ikema Y."/>
            <person name="Okamoto S."/>
            <person name="Okitani R."/>
            <person name="Kawakami T."/>
            <person name="Noguchi S."/>
            <person name="Itoh T."/>
            <person name="Shigeta K."/>
            <person name="Senba T."/>
            <person name="Matsumura K."/>
            <person name="Nakajima Y."/>
            <person name="Mizuno T."/>
            <person name="Morinaga M."/>
            <person name="Sasaki M."/>
            <person name="Togashi T."/>
            <person name="Oyama M."/>
            <person name="Hata H."/>
            <person name="Watanabe M."/>
            <person name="Komatsu T."/>
            <person name="Mizushima-Sugano J."/>
            <person name="Satoh T."/>
            <person name="Shirai Y."/>
            <person name="Takahashi Y."/>
            <person name="Nakagawa K."/>
            <person name="Okumura K."/>
            <person name="Nagase T."/>
            <person name="Nomura N."/>
            <person name="Kikuchi H."/>
            <person name="Masuho Y."/>
            <person name="Yamashita R."/>
            <person name="Nakai K."/>
            <person name="Yada T."/>
            <person name="Nakamura Y."/>
            <person name="Ohara O."/>
            <person name="Isogai T."/>
            <person name="Sugano S."/>
        </authorList>
    </citation>
    <scope>NUCLEOTIDE SEQUENCE [LARGE SCALE MRNA] (ISOFORM 2)</scope>
    <source>
        <tissue>Liver</tissue>
    </source>
</reference>
<reference key="9">
    <citation type="journal article" date="2003" name="Science">
        <title>Human chromosome 7: DNA sequence and biology.</title>
        <authorList>
            <person name="Scherer S.W."/>
            <person name="Cheung J."/>
            <person name="MacDonald J.R."/>
            <person name="Osborne L.R."/>
            <person name="Nakabayashi K."/>
            <person name="Herbrick J.-A."/>
            <person name="Carson A.R."/>
            <person name="Parker-Katiraee L."/>
            <person name="Skaug J."/>
            <person name="Khaja R."/>
            <person name="Zhang J."/>
            <person name="Hudek A.K."/>
            <person name="Li M."/>
            <person name="Haddad M."/>
            <person name="Duggan G.E."/>
            <person name="Fernandez B.A."/>
            <person name="Kanematsu E."/>
            <person name="Gentles S."/>
            <person name="Christopoulos C.C."/>
            <person name="Choufani S."/>
            <person name="Kwasnicka D."/>
            <person name="Zheng X.H."/>
            <person name="Lai Z."/>
            <person name="Nusskern D.R."/>
            <person name="Zhang Q."/>
            <person name="Gu Z."/>
            <person name="Lu F."/>
            <person name="Zeesman S."/>
            <person name="Nowaczyk M.J."/>
            <person name="Teshima I."/>
            <person name="Chitayat D."/>
            <person name="Shuman C."/>
            <person name="Weksberg R."/>
            <person name="Zackai E.H."/>
            <person name="Grebe T.A."/>
            <person name="Cox S.R."/>
            <person name="Kirkpatrick S.J."/>
            <person name="Rahman N."/>
            <person name="Friedman J.M."/>
            <person name="Heng H.H.Q."/>
            <person name="Pelicci P.G."/>
            <person name="Lo-Coco F."/>
            <person name="Belloni E."/>
            <person name="Shaffer L.G."/>
            <person name="Pober B."/>
            <person name="Morton C.C."/>
            <person name="Gusella J.F."/>
            <person name="Bruns G.A.P."/>
            <person name="Korf B.R."/>
            <person name="Quade B.J."/>
            <person name="Ligon A.H."/>
            <person name="Ferguson H."/>
            <person name="Higgins A.W."/>
            <person name="Leach N.T."/>
            <person name="Herrick S.R."/>
            <person name="Lemyre E."/>
            <person name="Farra C.G."/>
            <person name="Kim H.-G."/>
            <person name="Summers A.M."/>
            <person name="Gripp K.W."/>
            <person name="Roberts W."/>
            <person name="Szatmari P."/>
            <person name="Winsor E.J.T."/>
            <person name="Grzeschik K.-H."/>
            <person name="Teebi A."/>
            <person name="Minassian B.A."/>
            <person name="Kere J."/>
            <person name="Armengol L."/>
            <person name="Pujana M.A."/>
            <person name="Estivill X."/>
            <person name="Wilson M.D."/>
            <person name="Koop B.F."/>
            <person name="Tosi S."/>
            <person name="Moore G.E."/>
            <person name="Boright A.P."/>
            <person name="Zlotorynski E."/>
            <person name="Kerem B."/>
            <person name="Kroisel P.M."/>
            <person name="Petek E."/>
            <person name="Oscier D.G."/>
            <person name="Mould S.J."/>
            <person name="Doehner H."/>
            <person name="Doehner K."/>
            <person name="Rommens J.M."/>
            <person name="Vincent J.B."/>
            <person name="Venter J.C."/>
            <person name="Li P.W."/>
            <person name="Mural R.J."/>
            <person name="Adams M.D."/>
            <person name="Tsui L.-C."/>
        </authorList>
    </citation>
    <scope>NUCLEOTIDE SEQUENCE [LARGE SCALE GENOMIC DNA]</scope>
</reference>
<reference key="10">
    <citation type="submission" date="2005-09" db="EMBL/GenBank/DDBJ databases">
        <authorList>
            <person name="Mural R.J."/>
            <person name="Istrail S."/>
            <person name="Sutton G.G."/>
            <person name="Florea L."/>
            <person name="Halpern A.L."/>
            <person name="Mobarry C.M."/>
            <person name="Lippert R."/>
            <person name="Walenz B."/>
            <person name="Shatkay H."/>
            <person name="Dew I."/>
            <person name="Miller J.R."/>
            <person name="Flanigan M.J."/>
            <person name="Edwards N.J."/>
            <person name="Bolanos R."/>
            <person name="Fasulo D."/>
            <person name="Halldorsson B.V."/>
            <person name="Hannenhalli S."/>
            <person name="Turner R."/>
            <person name="Yooseph S."/>
            <person name="Lu F."/>
            <person name="Nusskern D.R."/>
            <person name="Shue B.C."/>
            <person name="Zheng X.H."/>
            <person name="Zhong F."/>
            <person name="Delcher A.L."/>
            <person name="Huson D.H."/>
            <person name="Kravitz S.A."/>
            <person name="Mouchard L."/>
            <person name="Reinert K."/>
            <person name="Remington K.A."/>
            <person name="Clark A.G."/>
            <person name="Waterman M.S."/>
            <person name="Eichler E.E."/>
            <person name="Adams M.D."/>
            <person name="Hunkapiller M.W."/>
            <person name="Myers E.W."/>
            <person name="Venter J.C."/>
        </authorList>
    </citation>
    <scope>NUCLEOTIDE SEQUENCE [LARGE SCALE GENOMIC DNA]</scope>
</reference>
<reference key="11">
    <citation type="journal article" date="2004" name="Genome Res.">
        <title>The status, quality, and expansion of the NIH full-length cDNA project: the Mammalian Gene Collection (MGC).</title>
        <authorList>
            <consortium name="The MGC Project Team"/>
        </authorList>
    </citation>
    <scope>NUCLEOTIDE SEQUENCE [LARGE SCALE MRNA]</scope>
    <source>
        <tissue>Lung</tissue>
    </source>
</reference>
<reference key="12">
    <citation type="journal article" date="1995" name="Biochemistry">
        <title>Sugar specificity of human beta-cell glucokinase: correlation of molecular models with kinetic measurements.</title>
        <authorList>
            <person name="Xu L.Z."/>
            <person name="Weber I.T."/>
            <person name="Harrison R.W."/>
            <person name="Gidh-Jain M."/>
            <person name="Pilkis S.J."/>
        </authorList>
    </citation>
    <scope>FUNCTION</scope>
    <scope>CATALYTIC ACTIVITY</scope>
    <scope>BIOPHYSICOCHEMICAL PROPERTIES</scope>
</reference>
<reference key="13">
    <citation type="journal article" date="1996" name="J. Clin. Invest.">
        <title>Impaired hepatic glycogen synthesis in glucokinase-deficient (MODY-2) subjects.</title>
        <authorList>
            <person name="Velho G."/>
            <person name="Petersen K.F."/>
            <person name="Perseghin G."/>
            <person name="Hwang J.H."/>
            <person name="Rothman D.L."/>
            <person name="Pueyo M.E."/>
            <person name="Cline G.W."/>
            <person name="Froguel P."/>
            <person name="Shulman G.I."/>
        </authorList>
    </citation>
    <scope>INVOLVEMENT IN MODY2</scope>
    <scope>FUNCTION</scope>
</reference>
<reference key="14">
    <citation type="journal article" date="1999" name="FEBS Lett.">
        <title>Glucokinase regulatory protein is essential for the proper subcellular localisation of liver glucokinase.</title>
        <authorList>
            <person name="de la Iglesia N."/>
            <person name="Veiga-da-Cunha M."/>
            <person name="Van Schaftingen E."/>
            <person name="Guinovart J.J."/>
            <person name="Ferrer J.C."/>
        </authorList>
    </citation>
    <scope>ACTIVITY REGULATION</scope>
    <scope>SUBCELLULAR LOCATION</scope>
</reference>
<reference key="15">
    <citation type="journal article" date="2009" name="Biochemistry">
        <title>Activating mutations in the human glucokinase gene revealed by genetic selection.</title>
        <authorList>
            <person name="Pal P."/>
            <person name="Miller B.G."/>
        </authorList>
    </citation>
    <scope>FUNCTION</scope>
    <scope>CATALYTIC ACTIVITY</scope>
    <scope>MUTAGENESIS OF SER-64; MET-197; ILE-211 AND SER-453</scope>
</reference>
<reference key="16">
    <citation type="journal article" date="2013" name="J. Biol. Chem.">
        <title>Identification of the ubiquitin-like domain of midnolin as a new glucokinase interaction partner.</title>
        <authorList>
            <person name="Hofmeister-Brix A."/>
            <person name="Kollmann K."/>
            <person name="Langer S."/>
            <person name="Schultz J."/>
            <person name="Lenzen S."/>
            <person name="Baltrusch S."/>
        </authorList>
    </citation>
    <scope>INTERACTION WITH MIDN</scope>
    <scope>SUBCELLULAR LOCATION</scope>
</reference>
<reference key="17">
    <citation type="journal article" date="1994" name="Diabetes">
        <title>Molecular model of human beta-cell glucokinase built by analogy to the crystal structure of yeast hexokinase B.</title>
        <authorList>
            <person name="St Charles R."/>
            <person name="Harrison R.W."/>
            <person name="Bell G.I."/>
            <person name="Pilkis S.J."/>
            <person name="Weber I.T."/>
        </authorList>
    </citation>
    <scope>3D-STRUCTURE MODELING</scope>
</reference>
<reference key="18">
    <citation type="journal article" date="2004" name="Structure">
        <title>Structural basis for allosteric regulation of the monomeric allosteric enzyme human glucokinase.</title>
        <authorList>
            <person name="Kamata K."/>
            <person name="Mitsuya M."/>
            <person name="Nishimura T."/>
            <person name="Eiki J."/>
            <person name="Nagata Y."/>
        </authorList>
    </citation>
    <scope>X-RAY CRYSTALLOGRAPHY (2.3 ANGSTROMS) OF 16-465 OF APOPROTEIN AND IN COMPLEX WITH GLUCOSE</scope>
    <scope>SUBUNIT</scope>
    <scope>ACTIVITY REGULATION</scope>
</reference>
<reference key="19">
    <citation type="journal article" date="2009" name="Bioorg. Med. Chem. Lett.">
        <title>Discovery of novel 3,6-disubstituted 2-pyridinecarboxamide derivatives as GK activators.</title>
        <authorList>
            <person name="Mitsuya M."/>
            <person name="Kamata K."/>
            <person name="Bamba M."/>
            <person name="Watanabe H."/>
            <person name="Sasaki Y."/>
            <person name="Sasaki K."/>
            <person name="Ohyama S."/>
            <person name="Hosaka H."/>
            <person name="Nagata Y."/>
            <person name="Eiki J."/>
            <person name="Nishimura T."/>
        </authorList>
    </citation>
    <scope>X-RAY CRYSTALLOGRAPHY (2.2 ANGSTROMS) OF 16-465 IN COMPLEX WITH SYNTHETIC ALLOSTERIC ACTIVATOR</scope>
</reference>
<reference evidence="52 53 54 55 56" key="20">
    <citation type="journal article" date="2011" name="Acta Crystallogr. D">
        <title>The active conformation of human glucokinase is not altered by allosteric activators.</title>
        <authorList>
            <person name="Petit P."/>
            <person name="Antoine M."/>
            <person name="Ferry G."/>
            <person name="Boutin J.A."/>
            <person name="Lagarde A."/>
            <person name="Gluais L."/>
            <person name="Vincentelli R."/>
            <person name="Vuillard L."/>
        </authorList>
    </citation>
    <scope>X-RAY CRYSTALLOGRAPHY (1.50 ANGSTROMS) OF 12-465 IN COMPLEX WITH ATP ANALOG AND GLUCOSE</scope>
</reference>
<reference key="21">
    <citation type="journal article" date="2013" name="Biochemistry">
        <title>Structural basis for regulation of human glucokinase by glucokinase regulatory protein.</title>
        <authorList>
            <person name="Beck T."/>
            <person name="Miller B.G."/>
        </authorList>
    </citation>
    <scope>X-RAY CRYSTALLOGRAPHY (3.4 ANGSTROMS) OF 3-465 IN COMPLEX WITH RAT GCKR</scope>
</reference>
<reference key="22">
    <citation type="journal article" date="1992" name="Lancet">
        <title>Nonsense mutation of glucokinase gene in late-onset non-insulin-dependent diabetes mellitus.</title>
        <authorList>
            <person name="Katagiri H."/>
            <person name="Asano T."/>
            <person name="Ishihara H."/>
            <person name="Inukai K."/>
            <person name="Anai M."/>
            <person name="Miyazaki J."/>
            <person name="Tsukuda K."/>
            <person name="Kikuchi M."/>
            <person name="Yazaki Y."/>
            <person name="Oka Y."/>
        </authorList>
    </citation>
    <scope>INVOLVEMENT IN T2D</scope>
    <scope>VARIANT T2D 186-ARG--GLN-465 DEL</scope>
</reference>
<reference key="23">
    <citation type="journal article" date="1992" name="Nat. Genet.">
        <title>Missense glucokinase mutation in maturity-onset diabetes of the young and mutation screening in late-onset diabetes.</title>
        <authorList>
            <person name="Stoffel M."/>
            <person name="Patel P."/>
            <person name="Lo Y.-M.D."/>
            <person name="Hattersley A.T."/>
            <person name="Lucassen A.M."/>
            <person name="Page R."/>
            <person name="Bell J.I."/>
            <person name="Bell G.I."/>
            <person name="Turner R.C."/>
            <person name="Wainscoat J.S."/>
        </authorList>
    </citation>
    <scope>VARIANT MODY2 ARG-299</scope>
</reference>
<reference key="24">
    <citation type="journal article" date="1993" name="Diabetes">
        <title>Glucokinase gene variants in the common form of NIDDM.</title>
        <authorList>
            <person name="Chiu K.C."/>
            <person name="Tanizawa Y."/>
            <person name="Permutt M.A."/>
        </authorList>
    </citation>
    <scope>VARIANT THR-11</scope>
</reference>
<reference key="25">
    <citation type="journal article" date="1993" name="Diabetes">
        <title>Identification of glucokinase mutations in subjects with gestational diabetes mellitus.</title>
        <authorList>
            <person name="Stoffel M."/>
            <person name="Bell K.L."/>
            <person name="Blackburn C.L."/>
            <person name="Powell K.L."/>
            <person name="Seo T.S."/>
            <person name="Takeda J."/>
            <person name="Vionnet N."/>
            <person name="Xiang K.-S."/>
            <person name="Gidh-Jain M."/>
            <person name="Pilkis S.J."/>
            <person name="Ober C."/>
            <person name="Bell G.I."/>
        </authorList>
    </citation>
    <scope>VARIANT MODY2 PRO-131</scope>
</reference>
<reference key="26">
    <citation type="journal article" date="1993" name="J. Biol. Chem.">
        <title>Structure/function studies of human beta-cell glucokinase. Enzymatic properties of a sequence polymorphism, mutations associated with diabetes, and other site-directed mutants.</title>
        <authorList>
            <person name="Takeda J."/>
            <person name="Gidh-Jain M."/>
            <person name="Xu L.Z."/>
            <person name="Froguel P."/>
            <person name="Velho G."/>
            <person name="Vaxillaire M."/>
            <person name="Cohen D."/>
            <person name="Shimada F."/>
            <person name="Makino H."/>
            <person name="Nishi S."/>
            <person name="Stoffel M."/>
            <person name="Vionnet N."/>
            <person name="St Charles R."/>
            <person name="Harrison R.W."/>
            <person name="Weber I.T."/>
            <person name="Bell G.I."/>
            <person name="Pilkis S.J."/>
        </authorList>
    </citation>
    <scope>VARIANT ASN-4</scope>
    <scope>VARIANTS MODY2 LYS-70; PRO-131; THR-188; ARG-257 AND GLU-414</scope>
    <scope>MUTAGENESIS OF GLU-177; GLU-256 AND LYS-414</scope>
    <scope>CATALYTIC ACTIVITY</scope>
    <scope>FUNCTION</scope>
</reference>
<reference key="27">
    <citation type="journal article" date="1993" name="N. Engl. J. Med.">
        <title>Familial hyperglycemia due to mutations in glucokinase. Definition of a subtype of diabetes mellitus.</title>
        <authorList>
            <person name="Froguel P."/>
            <person name="Zouali H."/>
            <person name="Vionnet N."/>
            <person name="Velho G."/>
            <person name="Vaxillaire M."/>
            <person name="Sun F."/>
            <person name="Lesage S."/>
            <person name="Stoffel M."/>
            <person name="Takeda J."/>
            <person name="Passa P."/>
        </authorList>
    </citation>
    <scope>VARIANTS MODY2 ARG-175; MET-182; ALA-203; GLN-300; LYS-300 AND PRO-309</scope>
</reference>
<reference key="28">
    <citation type="journal article" date="1993" name="Proc. Natl. Acad. Sci. U.S.A.">
        <title>Glucokinase mutations associated with non-insulin-dependent (type 2) diabetes mellitus have decreased enzymatic activity: implications for structure/function relationships.</title>
        <authorList>
            <person name="Gidh-Jain M."/>
            <person name="Takeda J."/>
            <person name="Xu L.Z."/>
            <person name="Lange A.J."/>
            <person name="Vionnet N."/>
            <person name="Stoffel M."/>
            <person name="Froguel P."/>
            <person name="Velho G."/>
            <person name="Sun D."/>
            <person name="Cohen D."/>
            <person name="Patel P."/>
            <person name="Lo Y.-M.D."/>
            <person name="Hattersley A.T."/>
            <person name="Luthman H."/>
            <person name="Wedell A."/>
            <person name="St Charles R."/>
            <person name="Harrison R.W."/>
            <person name="Weber I.T."/>
            <person name="Bell G.I."/>
            <person name="Pilkis S.J."/>
        </authorList>
    </citation>
    <scope>CHARACTERIZATION OF VARIANTS MODY2</scope>
    <scope>VARIANT MODY2 GLN-279</scope>
</reference>
<reference key="29">
    <citation type="journal article" date="1994" name="Diabetes">
        <title>Six mutations in the glucokinase gene identified in MODY by using a nonradioactive sensitive screening technique.</title>
        <authorList>
            <person name="Hager J."/>
            <person name="Blanche H."/>
            <person name="Sun F."/>
            <person name="Vionnet N."/>
            <person name="Vaxillaire M."/>
            <person name="Poller W."/>
            <person name="Cohen D."/>
            <person name="Czernichow P."/>
            <person name="Velho G."/>
            <person name="Robert J.-J."/>
            <person name="Cohen N."/>
            <person name="Froguel P."/>
        </authorList>
    </citation>
    <scope>VARIANTS MODY2 TRP-36; MET-209 AND GLU-261</scope>
</reference>
<reference key="30">
    <citation type="journal article" date="1997" name="Diabetologia">
        <title>Identification of 14 new glucokinase mutations and description of the clinical profile of 42 MODY-2 families.</title>
        <authorList>
            <person name="Velho G."/>
            <person name="Blanche H."/>
            <person name="Vaxillaire M."/>
            <person name="Bellanne-Chantelot C."/>
            <person name="Pardini V.C."/>
            <person name="Timsit J."/>
            <person name="Passa P."/>
            <person name="Deschamps I."/>
            <person name="Robert J.-J."/>
            <person name="Weber I.T."/>
            <person name="Marotta D."/>
            <person name="Pilkis S.J."/>
            <person name="Lipkind G.M."/>
            <person name="Bell G.I."/>
            <person name="Froguel P."/>
        </authorList>
    </citation>
    <scope>VARIANTS MODY2 SER-53; ALA-80; ARG-137; PRO-168; 186-ARG--GLN-465 DEL; THR-210; ARG-213; MET-226; 248-GLU--GLN-465 DEL; ARG-261; LEU-336; 360-SER--GLN-465 DEL AND MET-367</scope>
</reference>
<reference key="31">
    <citation type="journal article" date="1998" name="Hum. Mutat.">
        <title>Three novel missense mutations in the glucokinase gene (G80S; E221K; G227C) in Italian subjects with maturity-onset diabetes of the young (MODY).</title>
        <authorList>
            <person name="Guazzini B."/>
            <person name="Gaffi D."/>
            <person name="Mainieri D."/>
            <person name="Multari G."/>
            <person name="Cordera R."/>
            <person name="Bertolini S."/>
            <person name="Pozza G."/>
            <person name="Meschi F."/>
            <person name="Barbetti F."/>
        </authorList>
    </citation>
    <scope>VARIANTS MODY2 SER-80; LYS-221 AND CYS-227</scope>
</reference>
<reference key="32">
    <citation type="journal article" date="1998" name="Nat. Genet.">
        <title>Mutations in the glucokinase gene of the fetus result in reduced birth weight.</title>
        <authorList>
            <person name="Hattersley A.T."/>
            <person name="Beards F."/>
            <person name="Ballantyne E."/>
            <person name="Appleton M."/>
            <person name="Harvey R."/>
            <person name="Ellard S."/>
        </authorList>
    </citation>
    <scope>VARIANTS MODY2 HIS-108; SER-150; THR-259; ARG-299; TYR-382; THR-384 AND CYS-392</scope>
</reference>
<reference key="33">
    <citation type="journal article" date="1998" name="N. Engl. J. Med.">
        <title>Familial hyperinsulinism caused by an activating glucokinase mutation.</title>
        <authorList>
            <person name="Glaser B."/>
            <person name="Kesavan P."/>
            <person name="Heyman M."/>
            <person name="Davis E."/>
            <person name="Cuesta A."/>
            <person name="Buchs A."/>
            <person name="Stanley C.A."/>
            <person name="Thornton P.S."/>
            <person name="Permutt M.A."/>
            <person name="Matschinsky F.M."/>
            <person name="Herold K.C."/>
        </authorList>
    </citation>
    <scope>VARIANT HHF3 MET-455</scope>
</reference>
<reference key="34">
    <citation type="journal article" date="1999" name="Diabet. Med.">
        <title>Molecular genetics of diabetes mellitus in Chinese subjects: identification of mutations in glucokinase and hepatocyte nuclear factor-1alpha genes in patients with early-onset type 2 diabetes mellitus/MODY.</title>
        <authorList>
            <person name="Ng M.C.Y."/>
            <person name="Cockburn B.N."/>
            <person name="Lindner T.H."/>
            <person name="Yeung V.T.F."/>
            <person name="Chow C.-C."/>
            <person name="So W.-Y."/>
            <person name="Li J.K.Y."/>
            <person name="Lo Y.M.D."/>
            <person name="Lee Z.S.K."/>
            <person name="Cockram C.S."/>
            <person name="Critchley J.A.J.H."/>
            <person name="Bell G.I."/>
            <person name="Chan J.C.N."/>
        </authorList>
    </citation>
    <scope>VARIANTS MODY2 THR-110; ASP-119 AND VAL-385</scope>
</reference>
<reference key="35">
    <citation type="journal article" date="2000" name="Diabetes Res. Clin. Pract.">
        <title>Identification of glucokinase mutation in subjects with post-renal transplantation diabetes mellitus.</title>
        <authorList>
            <person name="Nam J.H."/>
            <person name="Lee H.C."/>
            <person name="Kim Y.H."/>
            <person name="Cha B.S."/>
            <person name="Song Y.D."/>
            <person name="Lim S.K."/>
            <person name="Kim K.R."/>
            <person name="Huh K.B."/>
        </authorList>
    </citation>
    <scope>VARIANT MODY2 PRO-164</scope>
</reference>
<reference key="36">
    <citation type="journal article" date="2001" name="N. Engl. J. Med.">
        <title>Neonatal diabetes mellitus due to complete glucokinase deficiency.</title>
        <authorList>
            <person name="Njoelstad P.R."/>
            <person name="Soevik O."/>
            <person name="Cuesta-Munoz A."/>
            <person name="Bjoerkhaug L."/>
            <person name="Massa O."/>
            <person name="Barbetti F."/>
            <person name="Undlien D.E."/>
            <person name="Shiota C."/>
            <person name="Magnuson M.A."/>
            <person name="Molven A."/>
            <person name="Matschinsky F.M."/>
            <person name="Bell G.I."/>
        </authorList>
    </citation>
    <scope>INVOLVEMENT IN PNDM1</scope>
    <scope>INVOLVEMENT IN MODY2</scope>
    <scope>VARIANTS MODY2 LYS-210 AND MET-228</scope>
    <scope>VARIANTS PNDM1 LYS-210 AND MET-228</scope>
</reference>
<reference key="37">
    <citation type="journal article" date="2002" name="Diabetes">
        <title>The second activating glucokinase mutation (A456V): implications for glucose homeostasis and diabetes therapy.</title>
        <authorList>
            <person name="Christesen H.B."/>
            <person name="Jacobsen B.B."/>
            <person name="Odili S."/>
            <person name="Buettger C."/>
            <person name="Cuesta-Munoz A."/>
            <person name="Hansen T."/>
            <person name="Brusgaard K."/>
            <person name="Massa O."/>
            <person name="Magnuson M.A."/>
            <person name="Shiota C."/>
            <person name="Matschinsky F.M."/>
            <person name="Barbetti F."/>
        </authorList>
    </citation>
    <scope>VARIANT HHF3 VAL-456</scope>
    <scope>CHARACTERIZATION OF VARIANT HHF3 VAL-456</scope>
    <scope>FUNCTION</scope>
    <scope>CATALYTIC ACTIVITY</scope>
</reference>
<reference key="38">
    <citation type="journal article" date="2003" name="Diabetes">
        <title>Insights into the biochemical and genetic basis of glucokinase activation from naturally occurring hypoglycemia mutations.</title>
        <authorList>
            <person name="Gloyn A.L."/>
            <person name="Noordam K."/>
            <person name="Willemsen M.A."/>
            <person name="Ellard S."/>
            <person name="Lam W.W."/>
            <person name="Campbell I.W."/>
            <person name="Midgley P."/>
            <person name="Shiota C."/>
            <person name="Buettger C."/>
            <person name="Magnuson M.A."/>
            <person name="Matschinsky F.M."/>
            <person name="Hattersley A.T."/>
        </authorList>
    </citation>
    <scope>VARIANT HHF3 ILE-65</scope>
    <scope>CHARACTERIZATION OF VARIANT HHF3 ILE-65</scope>
</reference>
<reference key="39">
    <citation type="journal article" date="2004" name="Diabetes">
        <title>Severe persistent hyperinsulinemic hypoglycemia due to a de novo glucokinase mutation.</title>
        <authorList>
            <person name="Cuesta-Munoz A.L."/>
            <person name="Huopio H."/>
            <person name="Otonkoski T."/>
            <person name="Gomez-Zumaquero J.M."/>
            <person name="Naentoe-Salonen K."/>
            <person name="Rahier J."/>
            <person name="Lopez-Enriquez S."/>
            <person name="Garcia-Gimeno M.A."/>
            <person name="Sanz P."/>
            <person name="Soriguer F.C."/>
            <person name="Laakso M."/>
        </authorList>
    </citation>
    <scope>VARIANT HHF3 CYS-214</scope>
    <scope>CHARACTERIZATION OF VARIANT HHF3 CYS-214</scope>
    <scope>FUNCTION</scope>
    <scope>CATALYTIC ACTIVITY</scope>
</reference>
<reference key="40">
    <citation type="journal article" date="2006" name="Clin. Genet.">
        <title>Identification of novel and recurrent glucokinase mutations in Belgian and Luxembourg maturity onset diabetes of the young patients.</title>
        <authorList>
            <person name="Vits L."/>
            <person name="Beckers D."/>
            <person name="Craen M."/>
            <person name="de Beaufort C."/>
            <person name="Vanfleteren E."/>
            <person name="Dahan K."/>
            <person name="Nollet A."/>
            <person name="Vanhaverbeke G."/>
            <person name="Imschoot S.V."/>
            <person name="Bourguignon J.P."/>
            <person name="Beauloye V."/>
            <person name="Storm K."/>
            <person name="Massa G."/>
            <person name="Giri M."/>
            <person name="Nobels F."/>
            <person name="De Schepper J."/>
            <person name="Rooman R."/>
            <person name="Van den Bruel A."/>
            <person name="Mathieu C."/>
            <person name="Wuyts W."/>
        </authorList>
    </citation>
    <scope>VARIANTS MODY2 TRP-36; TYR-129; LEU-152; VAL-188; TRP-191; ARG-202; SER-223; MET-226; HIS-231; PHE-315; THR-378; PHE-434; TRP-441 AND GLN-447</scope>
</reference>
<reference key="41">
    <citation type="journal article" date="2006" name="J. Biol. Chem.">
        <title>Biochemical basis of glucokinase activation and the regulation by glucokinase regulatory protein in naturally occurring mutations.</title>
        <authorList>
            <person name="Heredia V.V."/>
            <person name="Carlson T.J."/>
            <person name="Garcia E."/>
            <person name="Sun S."/>
        </authorList>
    </citation>
    <scope>CHARACTERIZATION OF VARIANTS HHF3 ILE-65; CYS-214; MET-455 AND VAL-456</scope>
    <scope>MUTAGENESIS OF TYR-214 AND TYR-215</scope>
    <scope>FUNCTION</scope>
    <scope>CATALYTIC ACTIVITY</scope>
</reference>
<reference key="42">
    <citation type="journal article" date="2007" name="Clin. Endocrinol. (Oxf.)">
        <title>Mutations in GCK and HNF-1alpha explain the majority of cases with clinical diagnosis of MODY in Spain.</title>
        <authorList>
            <consortium name="Spanish MODY Group"/>
            <person name="Estalella I."/>
            <person name="Rica I."/>
            <person name="Perez de Nanclares G."/>
            <person name="Bilbao J.R."/>
            <person name="Vazquez J.A."/>
            <person name="San Pedro J.I."/>
            <person name="Busturia M.A."/>
            <person name="Castano L."/>
        </authorList>
    </citation>
    <scope>VARIANTS MODY2 GLU-16; ASN-19; PRO-20; TRP-36; SER-43; SER-44; 61-TYR--GLN-465 DEL; SER-61; LYS-70; ARG-72; PRO-77; GLU-78; ASP-80; ILE-82; HIS-108; PRO-116; LEU-182; 186-ARG--GLN-465 DEL; TYR-187; TRP-191; LEU-200; THR-202; MET-206; MET-209; SER-223; ARG-224; SER-227; MET-228; ARG-233; 234-TYR--GLN-465 DEL; GLY-252; ALA-255; LYS-256; ARG-261; LYS-265; LYS-298; TRP-308; HIS-377; VAL-379; LEU-383; 399-GLU--GLN-465 DEL; PHE-411; PRO-416; GLU-420 AND TRP-441</scope>
</reference>
<reference key="43">
    <citation type="journal article" date="2008" name="J. Hum. Genet.">
        <title>Biochemical characterization of novel glucokinase mutations isolated from Spanish maturity-onset diabetes of the young (MODY2) patients.</title>
        <authorList>
            <person name="Estalella I."/>
            <person name="Garcia-Gimeno M.A."/>
            <person name="Marina A."/>
            <person name="Castano L."/>
            <person name="Sanz P."/>
        </authorList>
    </citation>
    <scope>CHARACTERIZATION OF VARIANTS MODY2 SER-61; LEU-182; ARG-233; LYS-265; VAL-379 AND GLU-420</scope>
    <scope>FUNCTION</scope>
    <scope>CATALYTIC ACTIVITY</scope>
</reference>
<reference key="44">
    <citation type="journal article" date="2009" name="Mol. Endocrinol.">
        <title>Opposite clinical phenotypes of glucokinase disease: Description of a novel activating mutation and contiguous inactivating mutations in human glucokinase (GCK) gene.</title>
        <authorList>
            <person name="Barbetti F."/>
            <person name="Cobo-Vuilleumier N."/>
            <person name="Dionisi-Vici C."/>
            <person name="Toni S."/>
            <person name="Ciampalini P."/>
            <person name="Massa O."/>
            <person name="Rodriguez-Bada P."/>
            <person name="Colombo C."/>
            <person name="Lenzi L."/>
            <person name="Garcia-Gimeno M.A."/>
            <person name="Bermudez-Silva F.J."/>
            <person name="Rodriguez de Fonseca F."/>
            <person name="Banin P."/>
            <person name="Aledo J.C."/>
            <person name="Baixeras E."/>
            <person name="Sanz P."/>
            <person name="Cuesta-Munoz A.L."/>
        </authorList>
    </citation>
    <scope>VARIANT MODY2 TRP-441</scope>
    <scope>CHARACTERIZATION OF VARIANT MODY2 TRP-441</scope>
    <scope>VARIANT HHF3 LYS-442</scope>
    <scope>CHARACTERIZATION OF VARIANT HHF3 LYS-442</scope>
</reference>
<reference key="45">
    <citation type="journal article" date="2010" name="N. Engl. J. Med.">
        <title>Large islets, beta-cell proliferation, and a glucokinase mutation.</title>
        <authorList>
            <person name="Kassem S."/>
            <person name="Bhandari S."/>
            <person name="Rodriguez-Bada P."/>
            <person name="Motaghedi R."/>
            <person name="Heyman M."/>
            <person name="Garcia-Gimeno M.A."/>
            <person name="Cobo-Vuilleumier N."/>
            <person name="Sanz P."/>
            <person name="Maclaren N.K."/>
            <person name="Rahier J."/>
            <person name="Glaser B."/>
            <person name="Cuesta-Munoz A.L."/>
        </authorList>
    </citation>
    <scope>VARIANT HHF3 LEU-91</scope>
    <scope>CHARACTERIZATION OF VARIANT HHF3 LEU-91</scope>
</reference>
<reference key="46">
    <citation type="journal article" date="2010" name="N. Engl. J. Med.">
        <authorList>
            <person name="Kassem S."/>
            <person name="Bhandari S."/>
            <person name="Rodriguez-Bada P."/>
            <person name="Motaghedi R."/>
            <person name="Heyman M."/>
            <person name="Garcia-Gimeno M.A."/>
            <person name="Cobo-Vuilleumier N."/>
            <person name="Sanz P."/>
            <person name="Maclaren N.K."/>
            <person name="Rahier J."/>
            <person name="Glaser B."/>
            <person name="Cuesta-Munoz A.L."/>
        </authorList>
    </citation>
    <scope>ERRATUM OF PUBMED:20375417</scope>
</reference>
<reference key="47">
    <citation type="journal article" date="2011" name="Diabetologia">
        <title>The previously reported T342P GCK missense variant is not a pathogenic mutation causing MODY.</title>
        <authorList>
            <person name="Steele A.M."/>
            <person name="Tribble N.D."/>
            <person name="Caswell R."/>
            <person name="Wensley K.J."/>
            <person name="Hattersley A.T."/>
            <person name="Gloyn A.L."/>
            <person name="Ellard S."/>
        </authorList>
    </citation>
    <scope>VARIANT PRO-342</scope>
</reference>
<reference key="48">
    <citation type="journal article" date="2012" name="Diabetes Care">
        <title>Insights into the pathogenicity of rare missense GCK variants from the identification and functional characterization of compound heterozygous and double mutations inherited in cis.</title>
        <authorList>
            <person name="Beer N.L."/>
            <person name="Osbak K.K."/>
            <person name="van de Bunt M."/>
            <person name="Tribble N.D."/>
            <person name="Steele A.M."/>
            <person name="Wensley K.J."/>
            <person name="Edghill E.L."/>
            <person name="Colcough K."/>
            <person name="Barrett A."/>
            <person name="Valentinova L."/>
            <person name="Rundle J.K."/>
            <person name="Raimondo A."/>
            <person name="Grimsby J."/>
            <person name="Ellard S."/>
            <person name="Gloyn A.L."/>
        </authorList>
    </citation>
    <scope>VARIANTS MODY2 HIS-43; ASP-68; ASN-217; MET-225; LYS-248; ARG-261 AND ARG-261</scope>
    <scope>CHARACTERIZATION OF VARIANTS MODY2 HIS-43; ASP-68; ASN-217; MET-225; LYS-248; ARG-261 AND ARG-261</scope>
</reference>
<reference key="49">
    <citation type="journal article" date="2014" name="Hum. Mol. Genet.">
        <title>Phenotypic severity of homozygous GCK mutations causing neonatal or childhood-onset diabetes is primarily mediated through effects on protein stability.</title>
        <authorList>
            <consortium name="International NDM Consortium"/>
            <person name="Raimondo A."/>
            <person name="Chakera A.J."/>
            <person name="Thomsen S.K."/>
            <person name="Colclough K."/>
            <person name="Barrett A."/>
            <person name="De Franco E."/>
            <person name="Chatelas A."/>
            <person name="Demirbilek H."/>
            <person name="Akcay T."/>
            <person name="Alawneh H."/>
            <person name="Flanagan S.E."/>
            <person name="Van De Bunt M."/>
            <person name="Hattersley A.T."/>
            <person name="Gloyn A.L."/>
            <person name="Ellard S."/>
        </authorList>
    </citation>
    <scope>VARIANTS PNDM1 LYS-40; CYS-43; ASP-50; ARG-72; THR-151; PRO-164; ALA-168; ARG-169; ARG-261; THR-393; LEU-397; LEU-441 AND THR-449</scope>
    <scope>CHARACTERIZATION OF VARIANTS PNDM1 LYS-40; CYS-43; ASP-50; ARG-72; ALA-168; ARG-261; THR-393; LEU-397; LEU-441 AND THR-449</scope>
    <scope>VARIANTS MODY2 ASN-160 AND MET-226</scope>
    <scope>CHARACTERIZATION OF VARIANT MODY2 ASN-160 AND MET-226</scope>
    <scope>FUNCTION</scope>
    <scope>CATALYTIC ACTIVITY</scope>
</reference>
<reference key="50">
    <citation type="journal article" date="2017" name="Clin. Endocrinol. (Oxf.)">
        <title>Heterogeneity in phenotype of hyperinsulinism caused by activating glucokinase mutations: a novel mutation and its functional characterization.</title>
        <authorList>
            <consortium name="Spanish Congenital Hyperinsulinism Group"/>
            <person name="Martinez R."/>
            <person name="Gutierrez-Nogues A."/>
            <person name="Fernandez-Ramos C."/>
            <person name="Velayos T."/>
            <person name="Vela A."/>
            <person name="Navas M.A."/>
            <person name="Castano L."/>
        </authorList>
    </citation>
    <scope>VARIANTS HHF3 ILE-65; LEU-91; CYS-99 AND LYS-442</scope>
    <scope>CHARACTERIZATION OF VARIANT HHF3 CYS-99</scope>
</reference>
<proteinExistence type="evidence at protein level"/>
<comment type="function">
    <text evidence="1 3 10 17 19 21 23 32 34 36 41">Catalyzes the phosphorylation of hexose, such as D-glucose, D-fructose and D-mannose, to hexose 6-phosphate (D-glucose 6-phosphate, D-fructose 6-phosphate and D-mannose 6-phosphate, respectively) (PubMed:11916951, PubMed:15277402, PubMed:17082186, PubMed:18322640, PubMed:19146401, PubMed:25015100, PubMed:7742312, PubMed:8325892). Compared to other hexokinases, has a weak affinity for D-glucose, and is effective only when glucose is abundant (By similarity). Mainly expressed in pancreatic beta cells and the liver and constitutes a rate-limiting step in glucose metabolism in these tissues (PubMed:11916951, PubMed:15277402, PubMed:18322640, PubMed:25015100, PubMed:8325892). Since insulin secretion parallels glucose metabolism and the low glucose affinity of GCK ensures that it can change its enzymatic activity within the physiological range of glucose concentrations, GCK acts as a glucose sensor in the pancreatic beta cell (By similarity). In pancreas, plays an important role in modulating insulin secretion (By similarity). In liver, helps to facilitate the uptake and conversion of glucose by acting as an insulin-sensitive determinant of hepatic glucose usage (By similarity). Required to provide D-glucose 6-phosphate for the synthesis of glycogen (PubMed:8878425). Mediates the initial step of glycolysis by catalyzing phosphorylation of D-glucose to D-glucose 6-phosphate (PubMed:7742312).</text>
</comment>
<comment type="catalytic activity">
    <reaction evidence="10 17 19 21 23 32 36">
        <text>a D-hexose + ATP = a D-hexose 6-phosphate + ADP + H(+)</text>
        <dbReference type="Rhea" id="RHEA:22740"/>
        <dbReference type="ChEBI" id="CHEBI:4194"/>
        <dbReference type="ChEBI" id="CHEBI:15378"/>
        <dbReference type="ChEBI" id="CHEBI:30616"/>
        <dbReference type="ChEBI" id="CHEBI:229467"/>
        <dbReference type="ChEBI" id="CHEBI:456216"/>
        <dbReference type="EC" id="2.7.1.1"/>
    </reaction>
    <physiologicalReaction direction="left-to-right" evidence="10 17 19 21 23 32 36">
        <dbReference type="Rhea" id="RHEA:22741"/>
    </physiologicalReaction>
</comment>
<comment type="catalytic activity">
    <reaction evidence="34">
        <text>D-fructose + ATP = D-fructose 6-phosphate + ADP + H(+)</text>
        <dbReference type="Rhea" id="RHEA:16125"/>
        <dbReference type="ChEBI" id="CHEBI:15378"/>
        <dbReference type="ChEBI" id="CHEBI:30616"/>
        <dbReference type="ChEBI" id="CHEBI:37721"/>
        <dbReference type="ChEBI" id="CHEBI:61527"/>
        <dbReference type="ChEBI" id="CHEBI:456216"/>
        <dbReference type="EC" id="2.7.1.1"/>
    </reaction>
    <physiologicalReaction direction="left-to-right" evidence="34">
        <dbReference type="Rhea" id="RHEA:16126"/>
    </physiologicalReaction>
</comment>
<comment type="catalytic activity">
    <reaction evidence="34">
        <text>D-glucose + ATP = D-glucose 6-phosphate + ADP + H(+)</text>
        <dbReference type="Rhea" id="RHEA:17825"/>
        <dbReference type="ChEBI" id="CHEBI:4167"/>
        <dbReference type="ChEBI" id="CHEBI:15378"/>
        <dbReference type="ChEBI" id="CHEBI:30616"/>
        <dbReference type="ChEBI" id="CHEBI:61548"/>
        <dbReference type="ChEBI" id="CHEBI:456216"/>
        <dbReference type="EC" id="2.7.1.1"/>
    </reaction>
    <physiologicalReaction direction="left-to-right" evidence="34">
        <dbReference type="Rhea" id="RHEA:17826"/>
    </physiologicalReaction>
</comment>
<comment type="catalytic activity">
    <reaction evidence="34">
        <text>D-mannose + ATP = D-mannose 6-phosphate + ADP + H(+)</text>
        <dbReference type="Rhea" id="RHEA:11028"/>
        <dbReference type="ChEBI" id="CHEBI:4208"/>
        <dbReference type="ChEBI" id="CHEBI:15378"/>
        <dbReference type="ChEBI" id="CHEBI:30616"/>
        <dbReference type="ChEBI" id="CHEBI:58735"/>
        <dbReference type="ChEBI" id="CHEBI:456216"/>
        <dbReference type="EC" id="2.7.1.1"/>
    </reaction>
    <physiologicalReaction direction="left-to-right" evidence="34">
        <dbReference type="Rhea" id="RHEA:11029"/>
    </physiologicalReaction>
</comment>
<comment type="activity regulation">
    <text evidence="5 15">Subject to allosteric regulation (PubMed:15016359). Low glucose and high fructose-6-phosphate triggers association with the inhibitor GCKR followed by sequestration in the nucleus (PubMed:10456334).</text>
</comment>
<comment type="biophysicochemical properties">
    <kinetics>
        <KM evidence="34">6.03 mM for glucose (at 30 degrees Celsius and pH 7.5)</KM>
        <KM evidence="34">4.35 mM for mannose (at 30 degrees Celsius and pH 7.5)</KM>
        <KM evidence="34">18 mM for 2-deoxyglucose (at 30 degrees Celsius and pH 7.5)</KM>
        <KM evidence="34">240 mM for fructose (at 30 degrees Celsius and pH 7.5)</KM>
        <KM evidence="34">61 mM for glucosamine (at 30 degrees Celsius and pH 9)</KM>
        <KM evidence="34">4.5 mM for ATP (at pH 7)</KM>
        <text evidence="34">kcat is 66.4 sec(-1) with glucose as substrate (at 30 degrees Celsius and pH 7.5) (PubMed:7742312). kcat is 56.4 sec(-1) with mannose as substrate (at 30 degrees Celsius and pH 7.5) (PubMed:7742312). kcat is 56.4 sec(-1) with 2-deoxyglucose as substrate (at 30 degrees Celsius and pH 7.5) (PubMed:7742312). kcat is 116.9 sec(-1) with fructose as substrate (at 30 degrees Celsius and pH 7.5) (PubMed:7742312). kcat is 19.9 sec(-1) with glucosamine as substrate (at 30 degrees Celsius and pH 9) (PubMed:7742312).</text>
    </kinetics>
    <phDependence>
        <text evidence="34">Optimum pH is 6-8 with glucose as substrate (PubMed:7742312). Optimum pH is 9-10 with glucosamine as substrate (PubMed:7742312).</text>
    </phDependence>
</comment>
<comment type="pathway">
    <text evidence="50">Carbohydrate metabolism; hexose metabolism.</text>
</comment>
<comment type="pathway">
    <text evidence="50">Carbohydrate degradation; glycolysis; D-glyceraldehyde 3-phosphate and glycerone phosphate from D-glucose: step 1/4.</text>
</comment>
<comment type="subunit">
    <text evidence="5 15 24 30 31">Monomer (PubMed:15016359, PubMed:19362831, PubMed:23957911). Interacts with MIDN; the interaction occurs preferentially at low glucose levels and results in inhibition of hexokinase activity (PubMed:24187134). Interacts with GCKR; leading to sequestration in the nucleus (PubMed:10456334).</text>
</comment>
<comment type="interaction">
    <interactant intactId="EBI-709928">
        <id>P35557</id>
    </interactant>
    <interactant intactId="EBI-709948">
        <id>Q14397</id>
        <label>GCKR</label>
    </interactant>
    <organismsDiffer>false</organismsDiffer>
    <experiments>5</experiments>
</comment>
<comment type="interaction">
    <interactant intactId="EBI-709928">
        <id>P35557</id>
    </interactant>
    <interactant intactId="EBI-709807">
        <id>P16118</id>
        <label>PFKFB1</label>
    </interactant>
    <organismsDiffer>false</organismsDiffer>
    <experiments>2</experiments>
</comment>
<comment type="interaction">
    <interactant intactId="EBI-709928">
        <id>P35557</id>
    </interactant>
    <interactant intactId="EBI-12047907">
        <id>A6NLX3</id>
        <label>SPDYE4</label>
    </interactant>
    <organismsDiffer>false</organismsDiffer>
    <experiments>3</experiments>
</comment>
<comment type="subcellular location">
    <subcellularLocation>
        <location evidence="5 31">Cytoplasm</location>
    </subcellularLocation>
    <subcellularLocation>
        <location evidence="5 31">Nucleus</location>
    </subcellularLocation>
    <subcellularLocation>
        <location evidence="1">Mitochondrion</location>
    </subcellularLocation>
    <text evidence="5">Under low glucose concentrations, GCK associates with GCKR and the inactive complex is recruited to the hepatocyte nucleus.</text>
</comment>
<comment type="alternative products">
    <event type="alternative splicing"/>
    <isoform>
        <id>P35557-1</id>
        <name>1</name>
        <sequence type="displayed"/>
    </isoform>
    <isoform>
        <id>P35557-2</id>
        <name>2</name>
        <sequence type="described" ref="VSP_002074"/>
    </isoform>
    <isoform>
        <id>P35557-3</id>
        <name>3</name>
        <sequence type="described" ref="VSP_002075"/>
    </isoform>
    <text evidence="49">A number of isoforms are produced by alternative promoter usage. The use of alternative promoters apparently enables the type IV hexokinase gene to be regulated by insulin in the liver and glucose in the beta cell. This may constitute an important feedback loop for maintaining glucose homeostasis.</text>
</comment>
<comment type="disease" evidence="6 7 8 9 12 14 16 18 20 21 25 29 32 35 36 37 38 40 41 42 44">
    <disease id="DI-01944">
        <name>Maturity-onset diabetes of the young 2</name>
        <acronym>MODY2</acronym>
        <description>A form of diabetes that is characterized by an autosomal dominant mode of inheritance, onset in childhood or early adulthood (usually before 25 years of age), a primary defect in insulin secretion and frequent insulin-independence at the beginning of the disease.</description>
        <dbReference type="MIM" id="125851"/>
    </disease>
    <text>The disease is caused by variants affecting the gene represented in this entry.</text>
</comment>
<comment type="disease" evidence="10 11 17 19 25 26 33 43">
    <disease id="DI-01581">
        <name>Hyperinsulinemic hypoglycemia, familial, 3</name>
        <acronym>HHF3</acronym>
        <description>A form of hyperinsulinemic hypoglycemia, a clinically and genetically heterogeneous disorder characterized by inappropriate insulin secretion from the pancreatic beta-cells in the presence of low blood glucose levels. HHF3 clinical features include loss of consciousness due to hypoglycemia, hypoglycemic coma, mental retardation due to repeated episodes of hypoglycemia, and seizures. HHF3 inheritance is autosomal dominant.</description>
        <dbReference type="MIM" id="602485"/>
    </disease>
    <text>The disease is caused by variants affecting the gene represented in this entry.</text>
</comment>
<comment type="disease" evidence="13">
    <disease id="DI-02060">
        <name>Type 2 diabetes mellitus</name>
        <acronym>T2D</acronym>
        <description>A multifactorial disorder of glucose homeostasis caused by a lack of sensitivity to insulin. Affected individuals usually have an obese body habitus and manifestations of a metabolic syndrome characterized by diabetes, insulin resistance, hypertension and hypertriglyceridemia. The disease results in long-term complications that affect the eyes, kidneys, nerves, and blood vessels.</description>
        <dbReference type="MIM" id="125853"/>
    </disease>
    <text>Disease susceptibility is associated with variants affecting the gene represented in this entry.</text>
</comment>
<comment type="disease" evidence="9 32">
    <disease id="DI-02152">
        <name>Diabetes mellitus, permanent neonatal, 1</name>
        <acronym>PNDM1</acronym>
        <description>An autosomal recessive form of permanent neonatal diabetes mellitus, a type of diabetes characterized by onset of persistent hyperglycemia within the first six months of life. Initial clinical manifestations include intrauterine growth retardation, hyperglycemia, glycosuria, osmotic polyuria, severe dehydration, and failure to thrive.</description>
        <dbReference type="MIM" id="606176"/>
    </disease>
    <text>The disease is caused by variants affecting the gene represented in this entry.</text>
</comment>
<comment type="similarity">
    <text evidence="4 48">Belongs to the hexokinase family.</text>
</comment>
<comment type="sequence caution" evidence="48">
    <conflict type="erroneous gene model prediction">
        <sequence resource="EMBL-CDS" id="AAA67541"/>
    </conflict>
</comment>
<comment type="sequence caution" evidence="48">
    <conflict type="erroneous gene model prediction">
        <sequence resource="EMBL-CDS" id="AAA67542"/>
    </conflict>
</comment>
<comment type="online information" name="Wikipedia">
    <link uri="https://en.wikipedia.org/wiki/Glucokinase"/>
    <text>Glucokinase entry</text>
</comment>
<dbReference type="EC" id="2.7.1.1" evidence="10 17 19 21 23 32 36"/>
<dbReference type="EMBL" id="M88011">
    <property type="protein sequence ID" value="AAA51824.1"/>
    <property type="molecule type" value="mRNA"/>
</dbReference>
<dbReference type="EMBL" id="M69051">
    <property type="protein sequence ID" value="AAB59563.1"/>
    <property type="status" value="ALT_SEQ"/>
    <property type="molecule type" value="mRNA"/>
</dbReference>
<dbReference type="EMBL" id="M90298">
    <property type="protein sequence ID" value="AAA67541.1"/>
    <property type="status" value="ALT_SEQ"/>
    <property type="molecule type" value="Genomic_DNA"/>
</dbReference>
<dbReference type="EMBL" id="M90298">
    <property type="protein sequence ID" value="AAA67542.1"/>
    <property type="status" value="ALT_SEQ"/>
    <property type="molecule type" value="Genomic_DNA"/>
</dbReference>
<dbReference type="EMBL" id="M90299">
    <property type="protein sequence ID" value="AAA52562.1"/>
    <property type="molecule type" value="mRNA"/>
</dbReference>
<dbReference type="EMBL" id="AF041022">
    <property type="protein sequence ID" value="AAB97680.1"/>
    <property type="molecule type" value="Genomic_DNA"/>
</dbReference>
<dbReference type="EMBL" id="AF041012">
    <property type="protein sequence ID" value="AAB97680.1"/>
    <property type="status" value="JOINED"/>
    <property type="molecule type" value="Genomic_DNA"/>
</dbReference>
<dbReference type="EMBL" id="AF041015">
    <property type="protein sequence ID" value="AAB97680.1"/>
    <property type="status" value="JOINED"/>
    <property type="molecule type" value="Genomic_DNA"/>
</dbReference>
<dbReference type="EMBL" id="AF041016">
    <property type="protein sequence ID" value="AAB97680.1"/>
    <property type="status" value="JOINED"/>
    <property type="molecule type" value="Genomic_DNA"/>
</dbReference>
<dbReference type="EMBL" id="AF041017">
    <property type="protein sequence ID" value="AAB97680.1"/>
    <property type="status" value="JOINED"/>
    <property type="molecule type" value="Genomic_DNA"/>
</dbReference>
<dbReference type="EMBL" id="AF041018">
    <property type="protein sequence ID" value="AAB97680.1"/>
    <property type="status" value="JOINED"/>
    <property type="molecule type" value="Genomic_DNA"/>
</dbReference>
<dbReference type="EMBL" id="AF041019">
    <property type="protein sequence ID" value="AAB97680.1"/>
    <property type="status" value="JOINED"/>
    <property type="molecule type" value="Genomic_DNA"/>
</dbReference>
<dbReference type="EMBL" id="AF041020">
    <property type="protein sequence ID" value="AAB97680.1"/>
    <property type="status" value="JOINED"/>
    <property type="molecule type" value="Genomic_DNA"/>
</dbReference>
<dbReference type="EMBL" id="AF041021">
    <property type="protein sequence ID" value="AAB97680.1"/>
    <property type="status" value="JOINED"/>
    <property type="molecule type" value="Genomic_DNA"/>
</dbReference>
<dbReference type="EMBL" id="AF041022">
    <property type="protein sequence ID" value="AAB97681.1"/>
    <property type="molecule type" value="Genomic_DNA"/>
</dbReference>
<dbReference type="EMBL" id="AF041013">
    <property type="protein sequence ID" value="AAB97681.1"/>
    <property type="status" value="JOINED"/>
    <property type="molecule type" value="Genomic_DNA"/>
</dbReference>
<dbReference type="EMBL" id="AF041015">
    <property type="protein sequence ID" value="AAB97681.1"/>
    <property type="status" value="JOINED"/>
    <property type="molecule type" value="Genomic_DNA"/>
</dbReference>
<dbReference type="EMBL" id="AF041016">
    <property type="protein sequence ID" value="AAB97681.1"/>
    <property type="status" value="JOINED"/>
    <property type="molecule type" value="Genomic_DNA"/>
</dbReference>
<dbReference type="EMBL" id="AF041017">
    <property type="protein sequence ID" value="AAB97681.1"/>
    <property type="status" value="JOINED"/>
    <property type="molecule type" value="Genomic_DNA"/>
</dbReference>
<dbReference type="EMBL" id="AF041018">
    <property type="protein sequence ID" value="AAB97681.1"/>
    <property type="status" value="JOINED"/>
    <property type="molecule type" value="Genomic_DNA"/>
</dbReference>
<dbReference type="EMBL" id="AF041019">
    <property type="protein sequence ID" value="AAB97681.1"/>
    <property type="status" value="JOINED"/>
    <property type="molecule type" value="Genomic_DNA"/>
</dbReference>
<dbReference type="EMBL" id="AF041020">
    <property type="protein sequence ID" value="AAB97681.1"/>
    <property type="status" value="JOINED"/>
    <property type="molecule type" value="Genomic_DNA"/>
</dbReference>
<dbReference type="EMBL" id="AF041021">
    <property type="protein sequence ID" value="AAB97681.1"/>
    <property type="status" value="JOINED"/>
    <property type="molecule type" value="Genomic_DNA"/>
</dbReference>
<dbReference type="EMBL" id="AF041022">
    <property type="protein sequence ID" value="AAB97682.1"/>
    <property type="molecule type" value="Genomic_DNA"/>
</dbReference>
<dbReference type="EMBL" id="AF041014">
    <property type="protein sequence ID" value="AAB97682.1"/>
    <property type="status" value="JOINED"/>
    <property type="molecule type" value="Genomic_DNA"/>
</dbReference>
<dbReference type="EMBL" id="AF041015">
    <property type="protein sequence ID" value="AAB97682.1"/>
    <property type="status" value="JOINED"/>
    <property type="molecule type" value="Genomic_DNA"/>
</dbReference>
<dbReference type="EMBL" id="AF041016">
    <property type="protein sequence ID" value="AAB97682.1"/>
    <property type="status" value="JOINED"/>
    <property type="molecule type" value="Genomic_DNA"/>
</dbReference>
<dbReference type="EMBL" id="AF041017">
    <property type="protein sequence ID" value="AAB97682.1"/>
    <property type="status" value="JOINED"/>
    <property type="molecule type" value="Genomic_DNA"/>
</dbReference>
<dbReference type="EMBL" id="AF041018">
    <property type="protein sequence ID" value="AAB97682.1"/>
    <property type="status" value="JOINED"/>
    <property type="molecule type" value="Genomic_DNA"/>
</dbReference>
<dbReference type="EMBL" id="AF041019">
    <property type="protein sequence ID" value="AAB97682.1"/>
    <property type="status" value="JOINED"/>
    <property type="molecule type" value="Genomic_DNA"/>
</dbReference>
<dbReference type="EMBL" id="AF041020">
    <property type="protein sequence ID" value="AAB97682.1"/>
    <property type="status" value="JOINED"/>
    <property type="molecule type" value="Genomic_DNA"/>
</dbReference>
<dbReference type="EMBL" id="AF041021">
    <property type="protein sequence ID" value="AAB97682.1"/>
    <property type="status" value="JOINED"/>
    <property type="molecule type" value="Genomic_DNA"/>
</dbReference>
<dbReference type="EMBL" id="AK122876">
    <property type="protein sequence ID" value="BAG53774.1"/>
    <property type="molecule type" value="mRNA"/>
</dbReference>
<dbReference type="EMBL" id="CH236960">
    <property type="protein sequence ID" value="EAL23765.1"/>
    <property type="molecule type" value="Genomic_DNA"/>
</dbReference>
<dbReference type="EMBL" id="CH236960">
    <property type="protein sequence ID" value="EAL23766.1"/>
    <property type="molecule type" value="Genomic_DNA"/>
</dbReference>
<dbReference type="EMBL" id="CH471128">
    <property type="protein sequence ID" value="EAW61114.1"/>
    <property type="molecule type" value="Genomic_DNA"/>
</dbReference>
<dbReference type="EMBL" id="CH471128">
    <property type="protein sequence ID" value="EAW61116.1"/>
    <property type="molecule type" value="Genomic_DNA"/>
</dbReference>
<dbReference type="EMBL" id="BC001890">
    <property type="protein sequence ID" value="AAH01890.1"/>
    <property type="molecule type" value="mRNA"/>
</dbReference>
<dbReference type="CCDS" id="CCDS5479.1">
    <molecule id="P35557-1"/>
</dbReference>
<dbReference type="CCDS" id="CCDS5480.1">
    <molecule id="P35557-2"/>
</dbReference>
<dbReference type="PIR" id="A46157">
    <property type="entry name" value="A46157"/>
</dbReference>
<dbReference type="PIR" id="B46157">
    <property type="entry name" value="B46157"/>
</dbReference>
<dbReference type="PIR" id="C46157">
    <property type="entry name" value="C46157"/>
</dbReference>
<dbReference type="RefSeq" id="NP_000153.1">
    <molecule id="P35557-1"/>
    <property type="nucleotide sequence ID" value="NM_000162.5"/>
</dbReference>
<dbReference type="RefSeq" id="NP_277042.1">
    <molecule id="P35557-2"/>
    <property type="nucleotide sequence ID" value="NM_033507.3"/>
</dbReference>
<dbReference type="RefSeq" id="NP_277043.1">
    <molecule id="P35557-3"/>
    <property type="nucleotide sequence ID" value="NM_033508.3"/>
</dbReference>
<dbReference type="PDB" id="1V4S">
    <property type="method" value="X-ray"/>
    <property type="resolution" value="2.30 A"/>
    <property type="chains" value="A=16-465"/>
</dbReference>
<dbReference type="PDB" id="1V4T">
    <property type="method" value="X-ray"/>
    <property type="resolution" value="3.40 A"/>
    <property type="chains" value="A=16-465"/>
</dbReference>
<dbReference type="PDB" id="3A0I">
    <property type="method" value="X-ray"/>
    <property type="resolution" value="2.20 A"/>
    <property type="chains" value="X=16-465"/>
</dbReference>
<dbReference type="PDB" id="3F9M">
    <property type="method" value="X-ray"/>
    <property type="resolution" value="1.50 A"/>
    <property type="chains" value="A=12-465"/>
</dbReference>
<dbReference type="PDB" id="3FGU">
    <property type="method" value="X-ray"/>
    <property type="resolution" value="2.15 A"/>
    <property type="chains" value="A=12-465"/>
</dbReference>
<dbReference type="PDB" id="3FR0">
    <property type="method" value="X-ray"/>
    <property type="resolution" value="2.70 A"/>
    <property type="chains" value="A=16-465"/>
</dbReference>
<dbReference type="PDB" id="3GOI">
    <property type="method" value="X-ray"/>
    <property type="resolution" value="2.52 A"/>
    <property type="chains" value="A=16-465"/>
</dbReference>
<dbReference type="PDB" id="3H1V">
    <property type="method" value="X-ray"/>
    <property type="resolution" value="2.11 A"/>
    <property type="chains" value="X=16-465"/>
</dbReference>
<dbReference type="PDB" id="3ID8">
    <property type="method" value="X-ray"/>
    <property type="resolution" value="2.40 A"/>
    <property type="chains" value="A=12-465"/>
</dbReference>
<dbReference type="PDB" id="3IDH">
    <property type="method" value="X-ray"/>
    <property type="resolution" value="2.14 A"/>
    <property type="chains" value="A=12-465"/>
</dbReference>
<dbReference type="PDB" id="3IMX">
    <property type="method" value="X-ray"/>
    <property type="resolution" value="2.00 A"/>
    <property type="chains" value="A=16-465"/>
</dbReference>
<dbReference type="PDB" id="3QIC">
    <property type="method" value="X-ray"/>
    <property type="resolution" value="2.20 A"/>
    <property type="chains" value="A=12-465"/>
</dbReference>
<dbReference type="PDB" id="3S41">
    <property type="method" value="X-ray"/>
    <property type="resolution" value="2.18 A"/>
    <property type="chains" value="A=12-465"/>
</dbReference>
<dbReference type="PDB" id="3VEV">
    <property type="method" value="X-ray"/>
    <property type="resolution" value="1.80 A"/>
    <property type="chains" value="A=12-465"/>
</dbReference>
<dbReference type="PDB" id="3VEY">
    <property type="method" value="X-ray"/>
    <property type="resolution" value="2.25 A"/>
    <property type="chains" value="A=16-465"/>
</dbReference>
<dbReference type="PDB" id="3VF6">
    <property type="method" value="X-ray"/>
    <property type="resolution" value="1.86 A"/>
    <property type="chains" value="A=12-465"/>
</dbReference>
<dbReference type="PDB" id="4DCH">
    <property type="method" value="X-ray"/>
    <property type="resolution" value="1.79 A"/>
    <property type="chains" value="A=1-465"/>
</dbReference>
<dbReference type="PDB" id="4DHY">
    <property type="method" value="X-ray"/>
    <property type="resolution" value="2.38 A"/>
    <property type="chains" value="A=12-465"/>
</dbReference>
<dbReference type="PDB" id="4ISE">
    <property type="method" value="X-ray"/>
    <property type="resolution" value="1.78 A"/>
    <property type="chains" value="A=16-465"/>
</dbReference>
<dbReference type="PDB" id="4ISF">
    <property type="method" value="X-ray"/>
    <property type="resolution" value="2.09 A"/>
    <property type="chains" value="A=16-465"/>
</dbReference>
<dbReference type="PDB" id="4ISG">
    <property type="method" value="X-ray"/>
    <property type="resolution" value="2.64 A"/>
    <property type="chains" value="A=16-465"/>
</dbReference>
<dbReference type="PDB" id="4IWV">
    <property type="method" value="X-ray"/>
    <property type="resolution" value="2.10 A"/>
    <property type="chains" value="A=16-465"/>
</dbReference>
<dbReference type="PDB" id="4IXC">
    <property type="method" value="X-ray"/>
    <property type="resolution" value="2.00 A"/>
    <property type="chains" value="A=16-465"/>
</dbReference>
<dbReference type="PDB" id="4L3Q">
    <property type="method" value="X-ray"/>
    <property type="resolution" value="2.70 A"/>
    <property type="chains" value="A=16-465"/>
</dbReference>
<dbReference type="PDB" id="4LC9">
    <property type="method" value="X-ray"/>
    <property type="resolution" value="3.40 A"/>
    <property type="chains" value="B=3-465"/>
</dbReference>
<dbReference type="PDB" id="4MLE">
    <property type="method" value="X-ray"/>
    <property type="resolution" value="2.60 A"/>
    <property type="chains" value="A=16-465"/>
</dbReference>
<dbReference type="PDB" id="4MLH">
    <property type="method" value="X-ray"/>
    <property type="resolution" value="2.90 A"/>
    <property type="chains" value="A=16-465"/>
</dbReference>
<dbReference type="PDB" id="4NO7">
    <property type="method" value="X-ray"/>
    <property type="resolution" value="1.70 A"/>
    <property type="chains" value="A=12-465"/>
</dbReference>
<dbReference type="PDB" id="4RCH">
    <property type="method" value="X-ray"/>
    <property type="resolution" value="2.30 A"/>
    <property type="chains" value="A=16-465"/>
</dbReference>
<dbReference type="PDB" id="5V4W">
    <property type="method" value="X-ray"/>
    <property type="resolution" value="2.39 A"/>
    <property type="chains" value="A=16-465"/>
</dbReference>
<dbReference type="PDB" id="5V4X">
    <property type="method" value="X-ray"/>
    <property type="resolution" value="2.08 A"/>
    <property type="chains" value="A=16-465"/>
</dbReference>
<dbReference type="PDB" id="6E0E">
    <property type="method" value="X-ray"/>
    <property type="resolution" value="2.70 A"/>
    <property type="chains" value="A=16-461"/>
</dbReference>
<dbReference type="PDB" id="6E0I">
    <property type="method" value="X-ray"/>
    <property type="resolution" value="1.90 A"/>
    <property type="chains" value="A=1-458"/>
</dbReference>
<dbReference type="PDB" id="7T78">
    <property type="method" value="X-ray"/>
    <property type="resolution" value="2.40 A"/>
    <property type="chains" value="A/B=16-465"/>
</dbReference>
<dbReference type="PDB" id="7T79">
    <property type="method" value="X-ray"/>
    <property type="resolution" value="2.40 A"/>
    <property type="chains" value="A/B=16-465"/>
</dbReference>
<dbReference type="PDBsum" id="1V4S"/>
<dbReference type="PDBsum" id="1V4T"/>
<dbReference type="PDBsum" id="3A0I"/>
<dbReference type="PDBsum" id="3F9M"/>
<dbReference type="PDBsum" id="3FGU"/>
<dbReference type="PDBsum" id="3FR0"/>
<dbReference type="PDBsum" id="3GOI"/>
<dbReference type="PDBsum" id="3H1V"/>
<dbReference type="PDBsum" id="3ID8"/>
<dbReference type="PDBsum" id="3IDH"/>
<dbReference type="PDBsum" id="3IMX"/>
<dbReference type="PDBsum" id="3QIC"/>
<dbReference type="PDBsum" id="3S41"/>
<dbReference type="PDBsum" id="3VEV"/>
<dbReference type="PDBsum" id="3VEY"/>
<dbReference type="PDBsum" id="3VF6"/>
<dbReference type="PDBsum" id="4DCH"/>
<dbReference type="PDBsum" id="4DHY"/>
<dbReference type="PDBsum" id="4ISE"/>
<dbReference type="PDBsum" id="4ISF"/>
<dbReference type="PDBsum" id="4ISG"/>
<dbReference type="PDBsum" id="4IWV"/>
<dbReference type="PDBsum" id="4IXC"/>
<dbReference type="PDBsum" id="4L3Q"/>
<dbReference type="PDBsum" id="4LC9"/>
<dbReference type="PDBsum" id="4MLE"/>
<dbReference type="PDBsum" id="4MLH"/>
<dbReference type="PDBsum" id="4NO7"/>
<dbReference type="PDBsum" id="4RCH"/>
<dbReference type="PDBsum" id="5V4W"/>
<dbReference type="PDBsum" id="5V4X"/>
<dbReference type="PDBsum" id="6E0E"/>
<dbReference type="PDBsum" id="6E0I"/>
<dbReference type="PDBsum" id="7T78"/>
<dbReference type="PDBsum" id="7T79"/>
<dbReference type="SMR" id="P35557"/>
<dbReference type="BioGRID" id="108915">
    <property type="interactions" value="18"/>
</dbReference>
<dbReference type="FunCoup" id="P35557">
    <property type="interactions" value="1783"/>
</dbReference>
<dbReference type="IntAct" id="P35557">
    <property type="interactions" value="6"/>
</dbReference>
<dbReference type="STRING" id="9606.ENSP00000223366"/>
<dbReference type="BindingDB" id="P35557"/>
<dbReference type="ChEMBL" id="CHEMBL3820"/>
<dbReference type="DrugBank" id="DB08118">
    <property type="generic name" value="2-(methylamino)-N-(4-methyl-1,3-thiazol-2-yl)-5-[(4-methyl-4H-1,2,4-triazol-3-yl)sulfanyl]benzamide"/>
</dbReference>
<dbReference type="DrugBank" id="DB08210">
    <property type="generic name" value="2-AMINO-4-FLUORO-5-[(1-METHYL-1H-IMIDAZOL-2-YL)SULFANYL]-N-(1,3-THIAZOL-2-YL)BENZAMIDE"/>
</dbReference>
<dbReference type="DrugBank" id="DB07358">
    <property type="generic name" value="2-amino-N-(4-methyl-1,3-thiazol-2-yl)-5-[(4-methyl-4H-1,2,4-triazol-3-yl)sulfanyl]benzamide"/>
</dbReference>
<dbReference type="DrugBank" id="DB07359">
    <property type="generic name" value="3-[(4-fluorophenyl)sulfanyl]-N-(4-methyl-1,3-thiazol-2-yl)-6-[(4-methyl-4H-1,2,4-triazol-3-yl)sulfanyl]pyridine-2-carboxamide"/>
</dbReference>
<dbReference type="DrugBank" id="DB14810">
    <property type="generic name" value="AZD-1656"/>
</dbReference>
<dbReference type="DrugBank" id="DB02379">
    <property type="generic name" value="Beta-D-Glucose"/>
</dbReference>
<dbReference type="DrugBank" id="DB01914">
    <property type="generic name" value="D-glucose"/>
</dbReference>
<dbReference type="DrugBank" id="DB09341">
    <property type="generic name" value="Dextrose, unspecified form"/>
</dbReference>
<dbReference type="DrugBank" id="DB15123">
    <property type="generic name" value="Dorzagliatin"/>
</dbReference>
<dbReference type="DrugBank" id="DB09344">
    <property type="generic name" value="Invert sugar"/>
</dbReference>
<dbReference type="DrugBank" id="DB05970">
    <property type="generic name" value="LY-2599506"/>
</dbReference>
<dbReference type="DrugBank" id="DB12284">
    <property type="generic name" value="LY-2608204"/>
</dbReference>
<dbReference type="DrugBank" id="DB15009">
    <property type="generic name" value="PF-04937319"/>
</dbReference>
<dbReference type="DrugBank" id="DB11765">
    <property type="generic name" value="PF-04991532"/>
</dbReference>
<dbReference type="GuidetoPHARMACOLOGY" id="2798"/>
<dbReference type="iPTMnet" id="P35557"/>
<dbReference type="PhosphoSitePlus" id="P35557"/>
<dbReference type="BioMuta" id="GCK"/>
<dbReference type="DMDM" id="547696"/>
<dbReference type="jPOST" id="P35557"/>
<dbReference type="MassIVE" id="P35557"/>
<dbReference type="PaxDb" id="9606-ENSP00000223366"/>
<dbReference type="PeptideAtlas" id="P35557"/>
<dbReference type="ProteomicsDB" id="55084">
    <molecule id="P35557-1"/>
</dbReference>
<dbReference type="ProteomicsDB" id="55085">
    <molecule id="P35557-2"/>
</dbReference>
<dbReference type="ProteomicsDB" id="55086">
    <molecule id="P35557-3"/>
</dbReference>
<dbReference type="Antibodypedia" id="2045">
    <property type="antibodies" value="529 antibodies from 35 providers"/>
</dbReference>
<dbReference type="DNASU" id="2645"/>
<dbReference type="Ensembl" id="ENST00000345378.7">
    <molecule id="P35557-2"/>
    <property type="protein sequence ID" value="ENSP00000223366.2"/>
    <property type="gene ID" value="ENSG00000106633.18"/>
</dbReference>
<dbReference type="Ensembl" id="ENST00000403799.8">
    <molecule id="P35557-1"/>
    <property type="protein sequence ID" value="ENSP00000384247.3"/>
    <property type="gene ID" value="ENSG00000106633.18"/>
</dbReference>
<dbReference type="GeneID" id="2645"/>
<dbReference type="KEGG" id="hsa:2645"/>
<dbReference type="MANE-Select" id="ENST00000403799.8">
    <property type="protein sequence ID" value="ENSP00000384247.3"/>
    <property type="RefSeq nucleotide sequence ID" value="NM_000162.5"/>
    <property type="RefSeq protein sequence ID" value="NP_000153.1"/>
</dbReference>
<dbReference type="UCSC" id="uc003tkj.2">
    <molecule id="P35557-1"/>
    <property type="organism name" value="human"/>
</dbReference>
<dbReference type="AGR" id="HGNC:4195"/>
<dbReference type="CTD" id="2645"/>
<dbReference type="DisGeNET" id="2645"/>
<dbReference type="GeneCards" id="GCK"/>
<dbReference type="GeneReviews" id="GCK"/>
<dbReference type="HGNC" id="HGNC:4195">
    <property type="gene designation" value="GCK"/>
</dbReference>
<dbReference type="HPA" id="ENSG00000106633">
    <property type="expression patterns" value="Tissue enhanced (brain, liver, pituitary gland)"/>
</dbReference>
<dbReference type="MalaCards" id="GCK"/>
<dbReference type="MIM" id="125851">
    <property type="type" value="phenotype"/>
</dbReference>
<dbReference type="MIM" id="125853">
    <property type="type" value="phenotype"/>
</dbReference>
<dbReference type="MIM" id="138079">
    <property type="type" value="gene"/>
</dbReference>
<dbReference type="MIM" id="602485">
    <property type="type" value="phenotype"/>
</dbReference>
<dbReference type="MIM" id="606176">
    <property type="type" value="phenotype"/>
</dbReference>
<dbReference type="MIM" id="606391">
    <property type="type" value="phenotype"/>
</dbReference>
<dbReference type="neXtProt" id="NX_P35557"/>
<dbReference type="OpenTargets" id="ENSG00000106633"/>
<dbReference type="Orphanet" id="79299">
    <property type="disease" value="Congenital glucokinase-related hyperinsulinism"/>
</dbReference>
<dbReference type="Orphanet" id="99885">
    <property type="disease" value="Isolated permanent neonatal diabetes mellitus"/>
</dbReference>
<dbReference type="Orphanet" id="552">
    <property type="disease" value="MODY"/>
</dbReference>
<dbReference type="PharmGKB" id="PA28610"/>
<dbReference type="VEuPathDB" id="HostDB:ENSG00000106633"/>
<dbReference type="eggNOG" id="KOG1369">
    <property type="taxonomic scope" value="Eukaryota"/>
</dbReference>
<dbReference type="GeneTree" id="ENSGT00950000182787"/>
<dbReference type="HOGENOM" id="CLU_014393_5_3_1"/>
<dbReference type="InParanoid" id="P35557"/>
<dbReference type="OrthoDB" id="419537at2759"/>
<dbReference type="PAN-GO" id="P35557">
    <property type="GO annotations" value="11 GO annotations based on evolutionary models"/>
</dbReference>
<dbReference type="PhylomeDB" id="P35557"/>
<dbReference type="TreeFam" id="TF314238"/>
<dbReference type="BioCyc" id="MetaCyc:HS02935-MONOMER"/>
<dbReference type="BRENDA" id="2.7.1.1">
    <property type="organism ID" value="2681"/>
</dbReference>
<dbReference type="PathwayCommons" id="P35557"/>
<dbReference type="Reactome" id="R-HSA-170822">
    <property type="pathway name" value="Regulation of Glucokinase by Glucokinase Regulatory Protein"/>
</dbReference>
<dbReference type="Reactome" id="R-HSA-210745">
    <property type="pathway name" value="Regulation of gene expression in beta cells"/>
</dbReference>
<dbReference type="Reactome" id="R-HSA-5619073">
    <property type="pathway name" value="Defective GCK causes maturity-onset diabetes of the young 2 (MODY2)"/>
</dbReference>
<dbReference type="Reactome" id="R-HSA-5619107">
    <property type="pathway name" value="Defective TPR may confer susceptibility towards thyroid papillary carcinoma (TPC)"/>
</dbReference>
<dbReference type="Reactome" id="R-HSA-70171">
    <property type="pathway name" value="Glycolysis"/>
</dbReference>
<dbReference type="Reactome" id="R-HSA-9615017">
    <property type="pathway name" value="FOXO-mediated transcription of oxidative stress, metabolic and neuronal genes"/>
</dbReference>
<dbReference type="SABIO-RK" id="P35557"/>
<dbReference type="SignaLink" id="P35557"/>
<dbReference type="SIGNOR" id="P35557"/>
<dbReference type="UniPathway" id="UPA00109">
    <property type="reaction ID" value="UER00180"/>
</dbReference>
<dbReference type="UniPathway" id="UPA00242"/>
<dbReference type="BioGRID-ORCS" id="2645">
    <property type="hits" value="15 hits in 1186 CRISPR screens"/>
</dbReference>
<dbReference type="ChiTaRS" id="GCK">
    <property type="organism name" value="human"/>
</dbReference>
<dbReference type="EvolutionaryTrace" id="P35557"/>
<dbReference type="GeneWiki" id="Glucokinase"/>
<dbReference type="GenomeRNAi" id="2645"/>
<dbReference type="Pharos" id="P35557">
    <property type="development level" value="Tchem"/>
</dbReference>
<dbReference type="PRO" id="PR:P35557"/>
<dbReference type="Proteomes" id="UP000005640">
    <property type="component" value="Chromosome 7"/>
</dbReference>
<dbReference type="RNAct" id="P35557">
    <property type="molecule type" value="protein"/>
</dbReference>
<dbReference type="Bgee" id="ENSG00000106633">
    <property type="expression patterns" value="Expressed in pituitary gland and 100 other cell types or tissues"/>
</dbReference>
<dbReference type="ExpressionAtlas" id="P35557">
    <property type="expression patterns" value="baseline and differential"/>
</dbReference>
<dbReference type="GO" id="GO:0005829">
    <property type="term" value="C:cytosol"/>
    <property type="evidence" value="ECO:0000314"/>
    <property type="project" value="HPA"/>
</dbReference>
<dbReference type="GO" id="GO:0005739">
    <property type="term" value="C:mitochondrion"/>
    <property type="evidence" value="ECO:0000318"/>
    <property type="project" value="GO_Central"/>
</dbReference>
<dbReference type="GO" id="GO:0005654">
    <property type="term" value="C:nucleoplasm"/>
    <property type="evidence" value="ECO:0000304"/>
    <property type="project" value="Reactome"/>
</dbReference>
<dbReference type="GO" id="GO:0005524">
    <property type="term" value="F:ATP binding"/>
    <property type="evidence" value="ECO:0000314"/>
    <property type="project" value="UniProtKB"/>
</dbReference>
<dbReference type="GO" id="GO:0005536">
    <property type="term" value="F:D-glucose binding"/>
    <property type="evidence" value="ECO:0000314"/>
    <property type="project" value="UniProtKB"/>
</dbReference>
<dbReference type="GO" id="GO:0008865">
    <property type="term" value="F:fructokinase activity"/>
    <property type="evidence" value="ECO:0000318"/>
    <property type="project" value="GO_Central"/>
</dbReference>
<dbReference type="GO" id="GO:0004340">
    <property type="term" value="F:glucokinase activity"/>
    <property type="evidence" value="ECO:0000314"/>
    <property type="project" value="UniProtKB"/>
</dbReference>
<dbReference type="GO" id="GO:0141089">
    <property type="term" value="F:glucose sensor activity"/>
    <property type="evidence" value="ECO:0000250"/>
    <property type="project" value="BHF-UCL"/>
</dbReference>
<dbReference type="GO" id="GO:0019158">
    <property type="term" value="F:mannokinase activity"/>
    <property type="evidence" value="ECO:0000318"/>
    <property type="project" value="GO_Central"/>
</dbReference>
<dbReference type="GO" id="GO:0070509">
    <property type="term" value="P:calcium ion import"/>
    <property type="evidence" value="ECO:0007669"/>
    <property type="project" value="Ensembl"/>
</dbReference>
<dbReference type="GO" id="GO:0061621">
    <property type="term" value="P:canonical glycolysis"/>
    <property type="evidence" value="ECO:0000304"/>
    <property type="project" value="Reactome"/>
</dbReference>
<dbReference type="GO" id="GO:0032869">
    <property type="term" value="P:cellular response to insulin stimulus"/>
    <property type="evidence" value="ECO:0000250"/>
    <property type="project" value="BHF-UCL"/>
</dbReference>
<dbReference type="GO" id="GO:0044320">
    <property type="term" value="P:cellular response to leptin stimulus"/>
    <property type="evidence" value="ECO:0000250"/>
    <property type="project" value="BHF-UCL"/>
</dbReference>
<dbReference type="GO" id="GO:0051156">
    <property type="term" value="P:glucose 6-phosphate metabolic process"/>
    <property type="evidence" value="ECO:0000315"/>
    <property type="project" value="UniProtKB"/>
</dbReference>
<dbReference type="GO" id="GO:0006007">
    <property type="term" value="P:glucose catabolic process"/>
    <property type="evidence" value="ECO:0000315"/>
    <property type="project" value="UniProtKB"/>
</dbReference>
<dbReference type="GO" id="GO:0042593">
    <property type="term" value="P:glucose homeostasis"/>
    <property type="evidence" value="ECO:0000315"/>
    <property type="project" value="UniProtKB"/>
</dbReference>
<dbReference type="GO" id="GO:0006006">
    <property type="term" value="P:glucose metabolic process"/>
    <property type="evidence" value="ECO:0000318"/>
    <property type="project" value="GO_Central"/>
</dbReference>
<dbReference type="GO" id="GO:0006096">
    <property type="term" value="P:glycolytic process"/>
    <property type="evidence" value="ECO:0000318"/>
    <property type="project" value="GO_Central"/>
</dbReference>
<dbReference type="GO" id="GO:0001678">
    <property type="term" value="P:intracellular glucose homeostasis"/>
    <property type="evidence" value="ECO:0000318"/>
    <property type="project" value="GO_Central"/>
</dbReference>
<dbReference type="GO" id="GO:0006739">
    <property type="term" value="P:NADP metabolic process"/>
    <property type="evidence" value="ECO:0007669"/>
    <property type="project" value="Ensembl"/>
</dbReference>
<dbReference type="GO" id="GO:0045721">
    <property type="term" value="P:negative regulation of gluconeogenesis"/>
    <property type="evidence" value="ECO:0000315"/>
    <property type="project" value="UniProtKB"/>
</dbReference>
<dbReference type="GO" id="GO:0045725">
    <property type="term" value="P:positive regulation of glycogen biosynthetic process"/>
    <property type="evidence" value="ECO:0000315"/>
    <property type="project" value="UniProtKB"/>
</dbReference>
<dbReference type="GO" id="GO:0032024">
    <property type="term" value="P:positive regulation of insulin secretion"/>
    <property type="evidence" value="ECO:0000315"/>
    <property type="project" value="UniProtKB"/>
</dbReference>
<dbReference type="GO" id="GO:0006110">
    <property type="term" value="P:regulation of glycolytic process"/>
    <property type="evidence" value="ECO:0000303"/>
    <property type="project" value="BHF-UCL"/>
</dbReference>
<dbReference type="GO" id="GO:0050796">
    <property type="term" value="P:regulation of insulin secretion"/>
    <property type="evidence" value="ECO:0000315"/>
    <property type="project" value="BHF-UCL"/>
</dbReference>
<dbReference type="GO" id="GO:0043266">
    <property type="term" value="P:regulation of potassium ion transport"/>
    <property type="evidence" value="ECO:0007669"/>
    <property type="project" value="Ensembl"/>
</dbReference>
<dbReference type="GO" id="GO:0009749">
    <property type="term" value="P:response to glucose"/>
    <property type="evidence" value="ECO:0000250"/>
    <property type="project" value="BHF-UCL"/>
</dbReference>
<dbReference type="CDD" id="cd24092">
    <property type="entry name" value="ASKHA_NBD_HK4_meta"/>
    <property type="match status" value="1"/>
</dbReference>
<dbReference type="FunFam" id="3.40.367.20:FF:000001">
    <property type="entry name" value="Hexokinase 1"/>
    <property type="match status" value="1"/>
</dbReference>
<dbReference type="FunFam" id="3.30.420.40:FF:000054">
    <property type="entry name" value="Phosphotransferase"/>
    <property type="match status" value="1"/>
</dbReference>
<dbReference type="Gene3D" id="3.30.420.40">
    <property type="match status" value="1"/>
</dbReference>
<dbReference type="Gene3D" id="3.40.367.20">
    <property type="match status" value="1"/>
</dbReference>
<dbReference type="InterPro" id="IPR043129">
    <property type="entry name" value="ATPase_NBD"/>
</dbReference>
<dbReference type="InterPro" id="IPR001312">
    <property type="entry name" value="Hexokinase"/>
</dbReference>
<dbReference type="InterPro" id="IPR019807">
    <property type="entry name" value="Hexokinase_BS"/>
</dbReference>
<dbReference type="InterPro" id="IPR022673">
    <property type="entry name" value="Hexokinase_C"/>
</dbReference>
<dbReference type="InterPro" id="IPR022672">
    <property type="entry name" value="Hexokinase_N"/>
</dbReference>
<dbReference type="PANTHER" id="PTHR19443">
    <property type="entry name" value="HEXOKINASE"/>
    <property type="match status" value="1"/>
</dbReference>
<dbReference type="PANTHER" id="PTHR19443:SF3">
    <property type="entry name" value="HEXOKINASE-4"/>
    <property type="match status" value="1"/>
</dbReference>
<dbReference type="Pfam" id="PF00349">
    <property type="entry name" value="Hexokinase_1"/>
    <property type="match status" value="1"/>
</dbReference>
<dbReference type="Pfam" id="PF03727">
    <property type="entry name" value="Hexokinase_2"/>
    <property type="match status" value="1"/>
</dbReference>
<dbReference type="PRINTS" id="PR00475">
    <property type="entry name" value="HEXOKINASE"/>
</dbReference>
<dbReference type="SUPFAM" id="SSF53067">
    <property type="entry name" value="Actin-like ATPase domain"/>
    <property type="match status" value="2"/>
</dbReference>
<dbReference type="PROSITE" id="PS00378">
    <property type="entry name" value="HEXOKINASE_1"/>
    <property type="match status" value="1"/>
</dbReference>
<dbReference type="PROSITE" id="PS51748">
    <property type="entry name" value="HEXOKINASE_2"/>
    <property type="match status" value="1"/>
</dbReference>
<feature type="chain" id="PRO_0000197593" description="Hexokinase-4">
    <location>
        <begin position="1"/>
        <end position="465"/>
    </location>
</feature>
<feature type="domain" description="Hexokinase" evidence="4">
    <location>
        <begin position="10"/>
        <end position="454"/>
    </location>
</feature>
<feature type="region of interest" description="Hexokinase small subdomain" evidence="4">
    <location>
        <begin position="67"/>
        <end position="203"/>
    </location>
</feature>
<feature type="region of interest" description="Hexokinase large subdomain" evidence="4">
    <location>
        <begin position="204"/>
        <end position="443"/>
    </location>
</feature>
<feature type="binding site" evidence="2">
    <location>
        <begin position="78"/>
        <end position="83"/>
    </location>
    <ligand>
        <name>ATP</name>
        <dbReference type="ChEBI" id="CHEBI:30616"/>
    </ligand>
</feature>
<feature type="binding site" evidence="15">
    <location>
        <begin position="151"/>
        <end position="152"/>
    </location>
    <ligand>
        <name>substrate</name>
    </ligand>
</feature>
<feature type="binding site" evidence="15">
    <location>
        <begin position="168"/>
        <end position="169"/>
    </location>
    <ligand>
        <name>substrate</name>
    </ligand>
</feature>
<feature type="binding site" evidence="15">
    <location>
        <begin position="204"/>
        <end position="205"/>
    </location>
    <ligand>
        <name>substrate</name>
    </ligand>
</feature>
<feature type="binding site" evidence="28 53 54">
    <location>
        <position position="228"/>
    </location>
    <ligand>
        <name>ATP</name>
        <dbReference type="ChEBI" id="CHEBI:30616"/>
    </ligand>
</feature>
<feature type="binding site" evidence="15">
    <location>
        <position position="231"/>
    </location>
    <ligand>
        <name>substrate</name>
    </ligand>
</feature>
<feature type="binding site" evidence="15">
    <location>
        <position position="256"/>
    </location>
    <ligand>
        <name>substrate</name>
    </ligand>
</feature>
<feature type="binding site" evidence="15">
    <location>
        <position position="290"/>
    </location>
    <ligand>
        <name>substrate</name>
    </ligand>
</feature>
<feature type="binding site" evidence="28 53 54">
    <location>
        <begin position="295"/>
        <end position="296"/>
    </location>
    <ligand>
        <name>ATP</name>
        <dbReference type="ChEBI" id="CHEBI:30616"/>
    </ligand>
</feature>
<feature type="binding site" evidence="28 53 54">
    <location>
        <begin position="332"/>
        <end position="336"/>
    </location>
    <ligand>
        <name>ATP</name>
        <dbReference type="ChEBI" id="CHEBI:30616"/>
    </ligand>
</feature>
<feature type="binding site" evidence="28 53 54">
    <location>
        <begin position="411"/>
        <end position="415"/>
    </location>
    <ligand>
        <name>ATP</name>
        <dbReference type="ChEBI" id="CHEBI:30616"/>
    </ligand>
</feature>
<feature type="splice variant" id="VSP_002074" description="In isoform 2." evidence="46">
    <original>MLDDRARMEAAKKEK</original>
    <variation>MAMDVTRSQAQTALTL</variation>
    <location>
        <begin position="1"/>
        <end position="15"/>
    </location>
</feature>
<feature type="splice variant" id="VSP_002075" description="In isoform 3." evidence="48">
    <original>MLDDRARMEAAKKEK</original>
    <variation>MPRPRSQLPQPNSQ</variation>
    <location>
        <begin position="1"/>
        <end position="15"/>
    </location>
</feature>
<feature type="sequence variant" id="VAR_003692" description="In dbSNP:rs202091228." evidence="36">
    <original>D</original>
    <variation>N</variation>
    <location>
        <position position="4"/>
    </location>
</feature>
<feature type="sequence variant" id="VAR_010583" description="In dbSNP:rs116093166." evidence="39">
    <original>A</original>
    <variation>T</variation>
    <location>
        <position position="11"/>
    </location>
</feature>
<feature type="sequence variant" id="VAR_079430" description="In MODY2." evidence="20">
    <original>V</original>
    <variation>E</variation>
    <location>
        <position position="16"/>
    </location>
</feature>
<feature type="sequence variant" id="VAR_079431" description="In MODY2." evidence="20">
    <original>I</original>
    <variation>N</variation>
    <location>
        <position position="19"/>
    </location>
</feature>
<feature type="sequence variant" id="VAR_079432" description="In MODY2." evidence="20">
    <original>L</original>
    <variation>P</variation>
    <location>
        <position position="20"/>
    </location>
</feature>
<feature type="sequence variant" id="VAR_010584" description="In MODY2; dbSNP:rs762263694." evidence="18 20 35">
    <original>R</original>
    <variation>W</variation>
    <location>
        <position position="36"/>
    </location>
</feature>
<feature type="sequence variant" id="VAR_079433" description="In PNDM1; decreased stability; decreased glucokinase activity; decreased affinity for glucose; dbSNP:rs794727236." evidence="32">
    <original>E</original>
    <variation>K</variation>
    <location>
        <position position="40"/>
    </location>
</feature>
<feature type="sequence variant" id="VAR_079434" description="In PNDM1; decreased stability; decreased glucokinase activity; no effect on affinity for glucose; dbSNP:rs1486280029." evidence="32">
    <original>R</original>
    <variation>C</variation>
    <location>
        <position position="43"/>
    </location>
</feature>
<feature type="sequence variant" id="VAR_075220" description="In MODY2; decreased enzyme stability shown by thermostability assays; no effect on kinetic parameters for glucokinase activity in vitro; dbSNP:rs764232985." evidence="29">
    <original>R</original>
    <variation>H</variation>
    <location>
        <position position="43"/>
    </location>
</feature>
<feature type="sequence variant" id="VAR_079435" description="In MODY2; dbSNP:rs1486280029." evidence="20">
    <original>R</original>
    <variation>S</variation>
    <location>
        <position position="43"/>
    </location>
</feature>
<feature type="sequence variant" id="VAR_079436" description="In MODY2; dbSNP:rs267601516." evidence="20">
    <original>G</original>
    <variation>S</variation>
    <location>
        <position position="44"/>
    </location>
</feature>
<feature type="sequence variant" id="VAR_079437" description="In PNDM1; loss of stability; loss of glucokinase activity; decreased affinity for glucose." evidence="32">
    <original>H</original>
    <variation>D</variation>
    <location>
        <position position="50"/>
    </location>
</feature>
<feature type="sequence variant" id="VAR_010585" description="In MODY2." evidence="42">
    <original>A</original>
    <variation>S</variation>
    <location>
        <position position="53"/>
    </location>
</feature>
<feature type="sequence variant" id="VAR_079438" description="In MODY2." evidence="20">
    <location>
        <begin position="61"/>
        <end position="465"/>
    </location>
</feature>
<feature type="sequence variant" id="VAR_079439" description="In MODY2; decreased glucokinase activity; decreased affinity for glucose; increased affinity for ATP." evidence="20 21">
    <original>Y</original>
    <variation>S</variation>
    <location>
        <position position="61"/>
    </location>
</feature>
<feature type="sequence variant" id="VAR_078243" description="In HHF3; increased glucokinase activity based on measure of catalytic efficiency; increased affinity for glucose; loss of inhibition by GCKR; unchanged affinity for ATP." evidence="11 19 33">
    <original>T</original>
    <variation>I</variation>
    <location>
        <position position="65"/>
    </location>
</feature>
<feature type="sequence variant" id="VAR_075221" description="In MODY2; likely benign; mildly increases glucokinase activity; dbSNP:rs373418736." evidence="29">
    <original>G</original>
    <variation>D</variation>
    <location>
        <position position="68"/>
    </location>
</feature>
<feature type="sequence variant" id="VAR_003693" description="In MODY2; decreased affinity for glucose; dbSNP:rs2128823091." evidence="20 36">
    <original>E</original>
    <variation>K</variation>
    <location>
        <position position="70"/>
    </location>
</feature>
<feature type="sequence variant" id="VAR_079440" description="In MODY2 and PNDM1; decreased stability; no effect on glucokinase activity; no effect on affinity for glucose; dbSNP:rs193922289." evidence="20 32">
    <original>G</original>
    <variation>R</variation>
    <location>
        <position position="72"/>
    </location>
</feature>
<feature type="sequence variant" id="VAR_079441" description="In MODY2; dbSNP:rs2096281827." evidence="20">
    <original>L</original>
    <variation>P</variation>
    <location>
        <position position="77"/>
    </location>
</feature>
<feature type="sequence variant" id="VAR_079442" description="In MODY2." evidence="20">
    <original>D</original>
    <variation>E</variation>
    <location>
        <position position="78"/>
    </location>
</feature>
<feature type="sequence variant" id="VAR_003694" description="In MODY2." evidence="42">
    <original>G</original>
    <variation>A</variation>
    <location>
        <position position="80"/>
    </location>
</feature>
<feature type="sequence variant" id="VAR_079443" description="In MODY2." evidence="20">
    <original>G</original>
    <variation>D</variation>
    <location>
        <position position="80"/>
    </location>
</feature>
<feature type="sequence variant" id="VAR_003695" description="In MODY2; dbSNP:rs1554335761." evidence="7">
    <original>G</original>
    <variation>S</variation>
    <location>
        <position position="80"/>
    </location>
</feature>
<feature type="sequence variant" id="VAR_079444" description="In MODY2." evidence="20">
    <original>T</original>
    <variation>I</variation>
    <location>
        <position position="82"/>
    </location>
</feature>
<feature type="sequence variant" id="VAR_078244" description="In HHF3; increased glucokinase activity; increased affinity for glucose." evidence="26 33">
    <original>V</original>
    <variation>L</variation>
    <location>
        <position position="91"/>
    </location>
</feature>
<feature type="sequence variant" id="VAR_078245" description="In HHF3; increased glucokinase activity; increased affinity for glucose; increased affinity for ATP." evidence="33">
    <original>W</original>
    <variation>C</variation>
    <location>
        <position position="99"/>
    </location>
</feature>
<feature type="sequence variant" id="VAR_003696" evidence="14 22">
    <original>M</original>
    <variation>T</variation>
    <location>
        <position position="107"/>
    </location>
</feature>
<feature type="sequence variant" id="VAR_010586" description="In MODY2; dbSNP:rs193922292." evidence="20 44">
    <original>Y</original>
    <variation>H</variation>
    <location>
        <position position="108"/>
    </location>
</feature>
<feature type="sequence variant" id="VAR_012352" description="In MODY2; dbSNP:rs1338970607." evidence="6">
    <original>I</original>
    <variation>T</variation>
    <location>
        <position position="110"/>
    </location>
</feature>
<feature type="sequence variant" id="VAR_079445" description="In MODY2." evidence="20">
    <original>T</original>
    <variation>P</variation>
    <location>
        <position position="116"/>
    </location>
</feature>
<feature type="sequence variant" id="VAR_012353" description="In MODY2; dbSNP:rs1176659689." evidence="6">
    <original>A</original>
    <variation>D</variation>
    <location>
        <position position="119"/>
    </location>
</feature>
<feature type="sequence variant" id="VAR_078246" description="In MODY2; dbSNP:rs2128822108." evidence="18">
    <original>C</original>
    <variation>Y</variation>
    <location>
        <position position="129"/>
    </location>
</feature>
<feature type="sequence variant" id="VAR_003697" description="In MODY2; decreased affinity for glucose; dbSNP:rs104894010." evidence="36 40">
    <original>S</original>
    <variation>P</variation>
    <location>
        <position position="131"/>
    </location>
</feature>
<feature type="sequence variant" id="VAR_010587" description="In MODY2." evidence="42">
    <original>H</original>
    <variation>R</variation>
    <location>
        <position position="137"/>
    </location>
</feature>
<feature type="sequence variant" id="VAR_010588" description="In MODY2; dbSNP:rs193922297." evidence="44">
    <original>F</original>
    <variation>S</variation>
    <location>
        <position position="150"/>
    </location>
</feature>
<feature type="sequence variant" id="VAR_079446" description="In PNDM1." evidence="32">
    <original>S</original>
    <variation>T</variation>
    <location>
        <position position="151"/>
    </location>
</feature>
<feature type="sequence variant" id="VAR_078247" description="In MODY2; dbSNP:rs2096280050." evidence="18">
    <original>F</original>
    <variation>L</variation>
    <location>
        <position position="152"/>
    </location>
</feature>
<feature type="sequence variant" id="VAR_079447" description="In MODY2; decreased glucokinase activity; decreased affinity for glucose; dbSNP:rs1554335566." evidence="32">
    <original>D</original>
    <variation>N</variation>
    <location>
        <position position="160"/>
    </location>
</feature>
<feature type="sequence variant" id="VAR_012350" description="In MODY2 and PNDM1; dbSNP:rs2096278847." evidence="8 32">
    <original>L</original>
    <variation>P</variation>
    <location>
        <position position="164"/>
    </location>
</feature>
<feature type="sequence variant" id="VAR_079448" description="In PNDM1; decreased glucokinase activity; decreased affinity for glucose." evidence="32">
    <original>T</original>
    <variation>A</variation>
    <location>
        <position position="168"/>
    </location>
</feature>
<feature type="sequence variant" id="VAR_010589" description="In MODY2." evidence="42">
    <original>T</original>
    <variation>P</variation>
    <location>
        <position position="168"/>
    </location>
</feature>
<feature type="sequence variant" id="VAR_079449" description="In PNDM1." evidence="32">
    <original>K</original>
    <variation>R</variation>
    <location>
        <position position="169"/>
    </location>
</feature>
<feature type="sequence variant" id="VAR_003698" description="In MODY2; dbSNP:rs587780344." evidence="37">
    <original>G</original>
    <variation>R</variation>
    <location>
        <position position="175"/>
    </location>
</feature>
<feature type="sequence variant" id="VAR_079450" description="In MODY2; decreased glucokinase activity; decreased affinity for glucose; increased affinity for ATP." evidence="20 21">
    <original>V</original>
    <variation>L</variation>
    <location>
        <position position="182"/>
    </location>
</feature>
<feature type="sequence variant" id="VAR_003699" description="In MODY2; dbSNP:rs587780345." evidence="37">
    <original>V</original>
    <variation>M</variation>
    <location>
        <position position="182"/>
    </location>
</feature>
<feature type="sequence variant" id="VAR_079451" description="In MODY2 and T2D." evidence="13 20 42">
    <location>
        <begin position="186"/>
        <end position="465"/>
    </location>
</feature>
<feature type="sequence variant" id="VAR_079452" description="In MODY2." evidence="20">
    <original>D</original>
    <variation>Y</variation>
    <location>
        <position position="187"/>
    </location>
</feature>
<feature type="sequence variant" id="VAR_003700" description="In MODY2; decreased affinity for glucose; dbSNP:rs751279776." evidence="36">
    <original>A</original>
    <variation>T</variation>
    <location>
        <position position="188"/>
    </location>
</feature>
<feature type="sequence variant" id="VAR_078248" description="In MODY2; dbSNP:rs193922307." evidence="18">
    <original>A</original>
    <variation>V</variation>
    <location>
        <position position="188"/>
    </location>
</feature>
<feature type="sequence variant" id="VAR_078249" description="In MODY2; dbSNP:rs1085307455." evidence="18 20">
    <original>R</original>
    <variation>W</variation>
    <location>
        <position position="191"/>
    </location>
</feature>
<feature type="sequence variant" id="VAR_079453" description="In MODY2." evidence="20">
    <original>V</original>
    <variation>L</variation>
    <location>
        <position position="200"/>
    </location>
</feature>
<feature type="sequence variant" id="VAR_078250" description="In MODY2." evidence="18">
    <original>M</original>
    <variation>R</variation>
    <location>
        <position position="202"/>
    </location>
</feature>
<feature type="sequence variant" id="VAR_079454" description="In MODY2; dbSNP:rs193922311." evidence="20">
    <original>M</original>
    <variation>T</variation>
    <location>
        <position position="202"/>
    </location>
</feature>
<feature type="sequence variant" id="VAR_003701" description="In MODY2; dbSNP:rs1562717053." evidence="37">
    <original>V</original>
    <variation>A</variation>
    <location>
        <position position="203"/>
    </location>
</feature>
<feature type="sequence variant" id="VAR_079455" description="In MODY2; dbSNP:rs1441649062." evidence="20">
    <original>T</original>
    <variation>M</variation>
    <location>
        <position position="206"/>
    </location>
</feature>
<feature type="sequence variant" id="VAR_010590" description="In MODY2; dbSNP:rs1583599303." evidence="20 35">
    <original>T</original>
    <variation>M</variation>
    <location>
        <position position="209"/>
    </location>
</feature>
<feature type="sequence variant" id="VAR_012351" description="In MODY2 and PNDM1; dbSNP:rs80356654." evidence="9">
    <original>M</original>
    <variation>K</variation>
    <location>
        <position position="210"/>
    </location>
</feature>
<feature type="sequence variant" id="VAR_010591" description="In MODY2; dbSNP:rs80356654." evidence="42">
    <original>M</original>
    <variation>T</variation>
    <location>
        <position position="210"/>
    </location>
</feature>
<feature type="sequence variant" id="VAR_010592" description="In MODY2." evidence="42">
    <original>C</original>
    <variation>R</variation>
    <location>
        <position position="213"/>
    </location>
</feature>
<feature type="sequence variant" id="VAR_079456" description="In HHF3; increased glucokinase activity based on measure of catalytic efficiency; increased affinity for glucose; decreased inhibition by GCKR; dbSNP:rs104894015." evidence="17 19">
    <original>Y</original>
    <variation>C</variation>
    <location>
        <position position="214"/>
    </location>
</feature>
<feature type="sequence variant" id="VAR_075222" description="In MODY2; benign; dbSNP:rs147065275." evidence="29">
    <original>D</original>
    <variation>N</variation>
    <location>
        <position position="217"/>
    </location>
</feature>
<feature type="sequence variant" id="VAR_003702" description="In MODY2; dbSNP:rs193922317." evidence="7">
    <original>E</original>
    <variation>K</variation>
    <location>
        <position position="221"/>
    </location>
</feature>
<feature type="sequence variant" id="VAR_078251" description="In MODY2; dbSNP:rs1360415315." evidence="18 20">
    <original>G</original>
    <variation>S</variation>
    <location>
        <position position="223"/>
    </location>
</feature>
<feature type="sequence variant" id="VAR_079457" description="In MODY2." evidence="20">
    <original>M</original>
    <variation>R</variation>
    <location>
        <position position="224"/>
    </location>
</feature>
<feature type="sequence variant" id="VAR_075223" description="In MODY2; associated in cis with K-248; highly decreased glucokinase activity; loss of glucokinase activity when associated with K-248; dbSNP:rs772754004." evidence="29">
    <original>I</original>
    <variation>M</variation>
    <location>
        <position position="225"/>
    </location>
</feature>
<feature type="sequence variant" id="VAR_003703" description="In MODY2; no effect on stability; decreased glucokinase activity; decreased affinity for glucose; dbSNP:rs148311934." evidence="18 32 42">
    <original>V</original>
    <variation>M</variation>
    <location>
        <position position="226"/>
    </location>
</feature>
<feature type="sequence variant" id="VAR_003704" description="In MODY2." evidence="7">
    <original>G</original>
    <variation>C</variation>
    <location>
        <position position="227"/>
    </location>
</feature>
<feature type="sequence variant" id="VAR_079458" description="In MODY2." evidence="20">
    <original>G</original>
    <variation>S</variation>
    <location>
        <position position="227"/>
    </location>
</feature>
<feature type="sequence variant" id="VAR_003705" description="In MODY2 and PNDM1; dbSNP:rs80356655." evidence="9 16 20">
    <original>T</original>
    <variation>M</variation>
    <location>
        <position position="228"/>
    </location>
</feature>
<feature type="sequence variant" id="VAR_078252" description="In MODY2; uncertain significance." evidence="18">
    <original>N</original>
    <variation>H</variation>
    <location>
        <position position="231"/>
    </location>
</feature>
<feature type="sequence variant" id="VAR_079459" description="In MODY2; loss of glucokinase activity; loss of affinity for glucose; loss of affinity for ATP." evidence="20 21">
    <original>C</original>
    <variation>R</variation>
    <location>
        <position position="233"/>
    </location>
</feature>
<feature type="sequence variant" id="VAR_079460" description="In MODY2." evidence="20">
    <location>
        <begin position="234"/>
        <end position="465"/>
    </location>
</feature>
<feature type="sequence variant" id="VAR_081975" description="In MODY2." evidence="42">
    <location>
        <begin position="248"/>
        <end position="465"/>
    </location>
</feature>
<feature type="sequence variant" id="VAR_075224" description="In MODY2; associated in cis with M-225; highly decreased glucokinase activity; loss of glucokinase activity when associated with M-225; dbSNP:rs759421263." evidence="29">
    <original>E</original>
    <variation>K</variation>
    <location>
        <position position="248"/>
    </location>
</feature>
<feature type="sequence variant" id="VAR_079461" description="In MODY2." evidence="20">
    <original>C</original>
    <variation>G</variation>
    <location>
        <position position="252"/>
    </location>
</feature>
<feature type="sequence variant" id="VAR_079462" description="In MODY2; dbSNP:rs2128820605." evidence="20">
    <original>T</original>
    <variation>A</variation>
    <location>
        <position position="255"/>
    </location>
</feature>
<feature type="sequence variant" id="VAR_003706" description="In MODY2; dbSNP:rs769268803." evidence="20">
    <original>E</original>
    <variation>K</variation>
    <location>
        <position position="256"/>
    </location>
</feature>
<feature type="sequence variant" id="VAR_003707" description="In MODY2; almost complete loss of glucokinase activity; dbSNP:rs1554335135." evidence="36">
    <original>W</original>
    <variation>R</variation>
    <location>
        <position position="257"/>
    </location>
</feature>
<feature type="sequence variant" id="VAR_010593" description="In MODY2; dbSNP:rs1375656631." evidence="44">
    <original>A</original>
    <variation>T</variation>
    <location>
        <position position="259"/>
    </location>
</feature>
<feature type="sequence variant" id="VAR_010594" description="In MODY2." evidence="35">
    <original>G</original>
    <variation>E</variation>
    <location>
        <position position="261"/>
    </location>
</feature>
<feature type="sequence variant" id="VAR_003708" description="In MODY2 and PNDM1; pathogenic; highly decreased glucokinase activity; decreased affinity for glucose; dbSNP:rs104894008." evidence="14 16 20 29 32 42">
    <original>G</original>
    <variation>R</variation>
    <location>
        <position position="261"/>
    </location>
</feature>
<feature type="sequence variant" id="VAR_079463" description="In MODY2; decreased glucokinase activity; decreased affinity for glucose; no effect on affinity for ATP; dbSNP:rs104894011." evidence="20 21">
    <original>E</original>
    <variation>K</variation>
    <location>
        <position position="265"/>
    </location>
</feature>
<feature type="sequence variant" id="VAR_003709" description="In MODY2; benign; dbSNP:rs104894005." evidence="38">
    <original>E</original>
    <variation>Q</variation>
    <location>
        <position position="279"/>
    </location>
</feature>
<feature type="sequence variant" id="VAR_079464" description="In MODY2." evidence="20">
    <original>M</original>
    <variation>K</variation>
    <location>
        <position position="298"/>
    </location>
</feature>
<feature type="sequence variant" id="VAR_003710" description="In MODY2; dbSNP:rs104894009." evidence="12 44">
    <original>G</original>
    <variation>R</variation>
    <location>
        <position position="299"/>
    </location>
</feature>
<feature type="sequence variant" id="VAR_003712" description="In MODY2; dbSNP:rs1255911887." evidence="37">
    <original>E</original>
    <variation>K</variation>
    <location>
        <position position="300"/>
    </location>
</feature>
<feature type="sequence variant" id="VAR_003711" description="In MODY2." evidence="37">
    <original>E</original>
    <variation>Q</variation>
    <location>
        <position position="300"/>
    </location>
</feature>
<feature type="sequence variant" id="VAR_079465" description="In MODY2." evidence="20">
    <original>R</original>
    <variation>W</variation>
    <location>
        <position position="308"/>
    </location>
</feature>
<feature type="sequence variant" id="VAR_003713" description="In MODY2; dbSNP:rs2128820009." evidence="37">
    <original>L</original>
    <variation>P</variation>
    <location>
        <position position="309"/>
    </location>
</feature>
<feature type="sequence variant" id="VAR_078253" description="In MODY2; uncertain significance; dbSNP:rs1583594350." evidence="18">
    <original>L</original>
    <variation>F</variation>
    <location>
        <position position="315"/>
    </location>
</feature>
<feature type="sequence variant" id="VAR_010595" description="In MODY2." evidence="42">
    <original>S</original>
    <variation>L</variation>
    <location>
        <position position="336"/>
    </location>
</feature>
<feature type="sequence variant" id="VAR_066615" description="In dbSNP:rs1000236360." evidence="27">
    <original>T</original>
    <variation>P</variation>
    <location>
        <position position="342"/>
    </location>
</feature>
<feature type="sequence variant" id="VAR_081976" description="In MODY2." evidence="42">
    <location>
        <begin position="360"/>
        <end position="465"/>
    </location>
</feature>
<feature type="sequence variant" id="VAR_010596" description="In MODY2; dbSNP:rs1057521092." evidence="42">
    <original>V</original>
    <variation>M</variation>
    <location>
        <position position="367"/>
    </location>
</feature>
<feature type="sequence variant" id="VAR_079466" description="In MODY2; dbSNP:rs193922264." evidence="20">
    <original>R</original>
    <variation>H</variation>
    <location>
        <position position="377"/>
    </location>
</feature>
<feature type="sequence variant" id="VAR_078254" description="In MODY2; dbSNP:rs104894016." evidence="18">
    <original>A</original>
    <variation>T</variation>
    <location>
        <position position="378"/>
    </location>
</feature>
<feature type="sequence variant" id="VAR_079467" description="In MODY2; decreased glucokinase activity; decreased affinity for glucose; decreased affinity for ATP; dbSNP:rs193922265." evidence="20 21">
    <original>A</original>
    <variation>V</variation>
    <location>
        <position position="379"/>
    </location>
</feature>
<feature type="sequence variant" id="VAR_010597" description="In MODY2; dbSNP:rs2096271616." evidence="44">
    <original>C</original>
    <variation>Y</variation>
    <location>
        <position position="382"/>
    </location>
</feature>
<feature type="sequence variant" id="VAR_079468" description="In MODY2; dbSNP:rs777870079." evidence="20">
    <original>S</original>
    <variation>L</variation>
    <location>
        <position position="383"/>
    </location>
</feature>
<feature type="sequence variant" id="VAR_010598" description="In MODY2; dbSNP:rs1376620210." evidence="44">
    <original>A</original>
    <variation>T</variation>
    <location>
        <position position="384"/>
    </location>
</feature>
<feature type="sequence variant" id="VAR_012354" description="In MODY2." evidence="6">
    <original>G</original>
    <variation>V</variation>
    <location>
        <position position="385"/>
    </location>
</feature>
<feature type="sequence variant" id="VAR_010599" description="In MODY2; dbSNP:rs1167124132." evidence="44">
    <original>R</original>
    <variation>C</variation>
    <location>
        <position position="392"/>
    </location>
</feature>
<feature type="sequence variant" id="VAR_079469" description="In PNDM1; decreased stability; increased glucokinase activity; no effect on affinity for glucose; dbSNP:rs2096271425." evidence="32">
    <original>M</original>
    <variation>T</variation>
    <location>
        <position position="393"/>
    </location>
</feature>
<feature type="sequence variant" id="VAR_079470" description="In PNDM1; decreased stability; increased glucokinase activity; no effect on affinity for glucose; dbSNP:rs193929375." evidence="32">
    <original>R</original>
    <variation>L</variation>
    <location>
        <position position="397"/>
    </location>
</feature>
<feature type="sequence variant" id="VAR_079471" description="In MODY2." evidence="20">
    <location>
        <begin position="399"/>
        <end position="465"/>
    </location>
</feature>
<feature type="sequence variant" id="VAR_079472" description="In MODY2." evidence="20">
    <original>S</original>
    <variation>F</variation>
    <location>
        <position position="411"/>
    </location>
</feature>
<feature type="sequence variant" id="VAR_003714" description="In MODY2; decreased affinity for glucose; dbSNP:rs193922272." evidence="36">
    <original>K</original>
    <variation>E</variation>
    <location>
        <position position="414"/>
    </location>
</feature>
<feature type="sequence variant" id="VAR_079473" description="In MODY2; dbSNP:rs1583591303." evidence="20">
    <original>H</original>
    <variation>P</variation>
    <location>
        <position position="416"/>
    </location>
</feature>
<feature type="sequence variant" id="VAR_079474" description="In MODY2; no effect on glucokinase activity; decreased affinity for glucose; no effect on affinity for ATP." evidence="20 21">
    <original>K</original>
    <variation>E</variation>
    <location>
        <position position="420"/>
    </location>
</feature>
<feature type="sequence variant" id="VAR_078255" description="In MODY2; uncertain significance." evidence="18">
    <original>C</original>
    <variation>F</variation>
    <location>
        <position position="434"/>
    </location>
</feature>
<feature type="sequence variant" id="VAR_079475" description="In PNDM1; uncertain significance; decreased stability; decreased glucokinase activity; no effect on affinity for glucose; dbSNP:rs1286804191." evidence="32">
    <original>S</original>
    <variation>L</variation>
    <location>
        <position position="441"/>
    </location>
</feature>
<feature type="sequence variant" id="VAR_078256" description="In MODY2; decreased affinity for glucose; dbSNP:rs1286804191." evidence="18 20 25">
    <original>S</original>
    <variation>W</variation>
    <location>
        <position position="441"/>
    </location>
</feature>
<feature type="sequence variant" id="VAR_078257" description="In HHF3; increased affinity for glucose; dbSNP:rs758737171." evidence="25 33">
    <original>E</original>
    <variation>K</variation>
    <location>
        <position position="442"/>
    </location>
</feature>
<feature type="sequence variant" id="VAR_078258" description="In MODY2; dbSNP:rs1131691416." evidence="18">
    <original>R</original>
    <variation>Q</variation>
    <location>
        <position position="447"/>
    </location>
</feature>
<feature type="sequence variant" id="VAR_079476" description="In PNDM1; decreased stability; increased glucokinase activity; increased affinity for glucose; dbSNP:rs193922282." evidence="32">
    <original>A</original>
    <variation>T</variation>
    <location>
        <position position="449"/>
    </location>
</feature>
<feature type="sequence variant" id="VAR_003715" description="In HHF3; increased glucokinase activity based on measure of catalytic efficiency; increased affinity for glucose; decreased inhibition by GCKR; no effect on affinity for ATP; dbSNP:rs104894012." evidence="19 43">
    <original>V</original>
    <variation>M</variation>
    <location>
        <position position="455"/>
    </location>
</feature>
<feature type="sequence variant" id="VAR_079477" description="In HHF3; increased glucokinase activity based on measure of catalytic efficiency; increased affinity for glucose; loss of inhibition by GCKR; no effect on affinity for ATP; dbSNP:rs104894014." evidence="10 19">
    <original>A</original>
    <variation>V</variation>
    <location>
        <position position="456"/>
    </location>
</feature>
<feature type="mutagenesis site" description="Increased glucokinase activity based on measure of catalytic efficiency. Increased affinity for glucose." evidence="23">
    <original>S</original>
    <variation>P</variation>
    <location>
        <position position="64"/>
    </location>
</feature>
<feature type="mutagenesis site" description="Small change in glucokinase activity." evidence="36">
    <original>E</original>
    <variation>K</variation>
    <location>
        <position position="177"/>
    </location>
</feature>
<feature type="mutagenesis site" description="Increased glucokinase activity based on measure of catalytic efficiency. Increased affinity for glucose." evidence="23">
    <original>M</original>
    <variation>V</variation>
    <location>
        <position position="197"/>
    </location>
</feature>
<feature type="mutagenesis site" description="Increased glucokinase activity based on measure of catalytic efficiency. Increased affinity for glucose." evidence="23">
    <original>I</original>
    <variation>F</variation>
    <location>
        <position position="211"/>
    </location>
</feature>
<feature type="mutagenesis site" description="Increased glucokinase activity based on measure of catalytic efficiency. Increased affinity for glucose. No effect on affinity for ATP." evidence="19">
    <original>Y</original>
    <variation>A</variation>
    <location>
        <position position="214"/>
    </location>
</feature>
<feature type="mutagenesis site" description="Increased glucokinase activity based on measure of catalytic efficiency. Increased affinity for glucose. Loss of inhibition by GCKR. No effect on affinity for ATP." evidence="19">
    <original>Y</original>
    <variation>A</variation>
    <location>
        <position position="215"/>
    </location>
</feature>
<feature type="mutagenesis site" description="Inactive enzyme with no glucokinase activity." evidence="36">
    <original>E</original>
    <variation>A</variation>
    <location>
        <position position="256"/>
    </location>
</feature>
<feature type="mutagenesis site" description="Small change in glucokinase activity." evidence="36">
    <original>K</original>
    <variation>A</variation>
    <location>
        <position position="414"/>
    </location>
</feature>
<feature type="mutagenesis site" description="Increased glucokinase activity based on measure of catalytic efficiency. Increased affinity for glucose." evidence="23">
    <original>S</original>
    <variation>A</variation>
    <location>
        <position position="453"/>
    </location>
</feature>
<feature type="helix" evidence="57">
    <location>
        <begin position="12"/>
        <end position="20"/>
    </location>
</feature>
<feature type="helix" evidence="57">
    <location>
        <begin position="21"/>
        <end position="23"/>
    </location>
</feature>
<feature type="helix" evidence="57">
    <location>
        <begin position="27"/>
        <end position="45"/>
    </location>
</feature>
<feature type="turn" evidence="57">
    <location>
        <begin position="47"/>
        <end position="52"/>
    </location>
</feature>
<feature type="strand" evidence="57">
    <location>
        <begin position="58"/>
        <end position="65"/>
    </location>
</feature>
<feature type="turn" evidence="62">
    <location>
        <begin position="66"/>
        <end position="68"/>
    </location>
</feature>
<feature type="strand" evidence="57">
    <location>
        <begin position="72"/>
        <end position="92"/>
    </location>
</feature>
<feature type="strand" evidence="58">
    <location>
        <begin position="95"/>
        <end position="97"/>
    </location>
</feature>
<feature type="strand" evidence="57">
    <location>
        <begin position="99"/>
        <end position="109"/>
    </location>
</feature>
<feature type="helix" evidence="57">
    <location>
        <begin position="112"/>
        <end position="115"/>
    </location>
</feature>
<feature type="strand" evidence="57">
    <location>
        <begin position="116"/>
        <end position="118"/>
    </location>
</feature>
<feature type="helix" evidence="57">
    <location>
        <begin position="119"/>
        <end position="136"/>
    </location>
</feature>
<feature type="strand" evidence="57">
    <location>
        <begin position="140"/>
        <end position="142"/>
    </location>
</feature>
<feature type="strand" evidence="57">
    <location>
        <begin position="145"/>
        <end position="150"/>
    </location>
</feature>
<feature type="strand" evidence="57">
    <location>
        <begin position="154"/>
        <end position="158"/>
    </location>
</feature>
<feature type="strand" evidence="57">
    <location>
        <begin position="161"/>
        <end position="164"/>
    </location>
</feature>
<feature type="helix" evidence="57">
    <location>
        <begin position="181"/>
        <end position="192"/>
    </location>
</feature>
<feature type="strand" evidence="57">
    <location>
        <begin position="198"/>
        <end position="203"/>
    </location>
</feature>
<feature type="helix" evidence="57">
    <location>
        <begin position="205"/>
        <end position="214"/>
    </location>
</feature>
<feature type="strand" evidence="57">
    <location>
        <begin position="220"/>
        <end position="237"/>
    </location>
</feature>
<feature type="helix" evidence="57">
    <location>
        <begin position="238"/>
        <end position="240"/>
    </location>
</feature>
<feature type="strand" evidence="57">
    <location>
        <begin position="248"/>
        <end position="254"/>
    </location>
</feature>
<feature type="helix" evidence="57">
    <location>
        <begin position="257"/>
        <end position="259"/>
    </location>
</feature>
<feature type="turn" evidence="57">
    <location>
        <begin position="260"/>
        <end position="263"/>
    </location>
</feature>
<feature type="strand" evidence="63">
    <location>
        <begin position="264"/>
        <end position="266"/>
    </location>
</feature>
<feature type="helix" evidence="57">
    <location>
        <begin position="267"/>
        <end position="269"/>
    </location>
</feature>
<feature type="helix" evidence="57">
    <location>
        <begin position="272"/>
        <end position="280"/>
    </location>
</feature>
<feature type="strand" evidence="57">
    <location>
        <begin position="281"/>
        <end position="283"/>
    </location>
</feature>
<feature type="helix" evidence="57">
    <location>
        <begin position="288"/>
        <end position="291"/>
    </location>
</feature>
<feature type="helix" evidence="57">
    <location>
        <begin position="295"/>
        <end position="311"/>
    </location>
</feature>
<feature type="helix" evidence="57">
    <location>
        <begin position="316"/>
        <end position="318"/>
    </location>
</feature>
<feature type="turn" evidence="57">
    <location>
        <begin position="322"/>
        <end position="325"/>
    </location>
</feature>
<feature type="helix" evidence="57">
    <location>
        <begin position="332"/>
        <end position="339"/>
    </location>
</feature>
<feature type="strand" evidence="59">
    <location>
        <begin position="340"/>
        <end position="342"/>
    </location>
</feature>
<feature type="strand" evidence="61">
    <location>
        <begin position="343"/>
        <end position="345"/>
    </location>
</feature>
<feature type="helix" evidence="57">
    <location>
        <begin position="346"/>
        <end position="354"/>
    </location>
</feature>
<feature type="helix" evidence="57">
    <location>
        <begin position="361"/>
        <end position="396"/>
    </location>
</feature>
<feature type="strand" evidence="57">
    <location>
        <begin position="400"/>
        <end position="409"/>
    </location>
</feature>
<feature type="helix" evidence="57">
    <location>
        <begin position="411"/>
        <end position="415"/>
    </location>
</feature>
<feature type="strand" evidence="60">
    <location>
        <begin position="416"/>
        <end position="418"/>
    </location>
</feature>
<feature type="helix" evidence="57">
    <location>
        <begin position="419"/>
        <end position="430"/>
    </location>
</feature>
<feature type="strand" evidence="57">
    <location>
        <begin position="434"/>
        <end position="440"/>
    </location>
</feature>
<feature type="helix" evidence="57">
    <location>
        <begin position="444"/>
        <end position="456"/>
    </location>
</feature>
<feature type="turn" evidence="58">
    <location>
        <begin position="457"/>
        <end position="459"/>
    </location>
</feature>
<evidence type="ECO:0000250" key="1">
    <source>
        <dbReference type="UniProtKB" id="P17712"/>
    </source>
</evidence>
<evidence type="ECO:0000250" key="2">
    <source>
        <dbReference type="UniProtKB" id="P19367"/>
    </source>
</evidence>
<evidence type="ECO:0000250" key="3">
    <source>
        <dbReference type="UniProtKB" id="P52792"/>
    </source>
</evidence>
<evidence type="ECO:0000255" key="4">
    <source>
        <dbReference type="PROSITE-ProRule" id="PRU01084"/>
    </source>
</evidence>
<evidence type="ECO:0000269" key="5">
    <source>
    </source>
</evidence>
<evidence type="ECO:0000269" key="6">
    <source>
    </source>
</evidence>
<evidence type="ECO:0000269" key="7">
    <source>
    </source>
</evidence>
<evidence type="ECO:0000269" key="8">
    <source>
    </source>
</evidence>
<evidence type="ECO:0000269" key="9">
    <source>
    </source>
</evidence>
<evidence type="ECO:0000269" key="10">
    <source>
    </source>
</evidence>
<evidence type="ECO:0000269" key="11">
    <source>
    </source>
</evidence>
<evidence type="ECO:0000269" key="12">
    <source>
    </source>
</evidence>
<evidence type="ECO:0000269" key="13">
    <source>
    </source>
</evidence>
<evidence type="ECO:0000269" key="14">
    <source>
    </source>
</evidence>
<evidence type="ECO:0000269" key="15">
    <source>
    </source>
</evidence>
<evidence type="ECO:0000269" key="16">
    <source>
    </source>
</evidence>
<evidence type="ECO:0000269" key="17">
    <source>
    </source>
</evidence>
<evidence type="ECO:0000269" key="18">
    <source>
    </source>
</evidence>
<evidence type="ECO:0000269" key="19">
    <source>
    </source>
</evidence>
<evidence type="ECO:0000269" key="20">
    <source>
    </source>
</evidence>
<evidence type="ECO:0000269" key="21">
    <source>
    </source>
</evidence>
<evidence type="ECO:0000269" key="22">
    <source>
    </source>
</evidence>
<evidence type="ECO:0000269" key="23">
    <source>
    </source>
</evidence>
<evidence type="ECO:0000269" key="24">
    <source>
    </source>
</evidence>
<evidence type="ECO:0000269" key="25">
    <source>
    </source>
</evidence>
<evidence type="ECO:0000269" key="26">
    <source>
    </source>
</evidence>
<evidence type="ECO:0000269" key="27">
    <source>
    </source>
</evidence>
<evidence type="ECO:0000269" key="28">
    <source>
    </source>
</evidence>
<evidence type="ECO:0000269" key="29">
    <source>
    </source>
</evidence>
<evidence type="ECO:0000269" key="30">
    <source>
    </source>
</evidence>
<evidence type="ECO:0000269" key="31">
    <source>
    </source>
</evidence>
<evidence type="ECO:0000269" key="32">
    <source>
    </source>
</evidence>
<evidence type="ECO:0000269" key="33">
    <source>
    </source>
</evidence>
<evidence type="ECO:0000269" key="34">
    <source>
    </source>
</evidence>
<evidence type="ECO:0000269" key="35">
    <source>
    </source>
</evidence>
<evidence type="ECO:0000269" key="36">
    <source>
    </source>
</evidence>
<evidence type="ECO:0000269" key="37">
    <source>
    </source>
</evidence>
<evidence type="ECO:0000269" key="38">
    <source>
    </source>
</evidence>
<evidence type="ECO:0000269" key="39">
    <source>
    </source>
</evidence>
<evidence type="ECO:0000269" key="40">
    <source>
    </source>
</evidence>
<evidence type="ECO:0000269" key="41">
    <source>
    </source>
</evidence>
<evidence type="ECO:0000269" key="42">
    <source>
    </source>
</evidence>
<evidence type="ECO:0000269" key="43">
    <source>
    </source>
</evidence>
<evidence type="ECO:0000269" key="44">
    <source>
    </source>
</evidence>
<evidence type="ECO:0000303" key="45">
    <source>
    </source>
</evidence>
<evidence type="ECO:0000303" key="46">
    <source>
    </source>
</evidence>
<evidence type="ECO:0000303" key="47">
    <source>
    </source>
</evidence>
<evidence type="ECO:0000305" key="48"/>
<evidence type="ECO:0000305" key="49">
    <source>
    </source>
</evidence>
<evidence type="ECO:0000305" key="50">
    <source>
    </source>
</evidence>
<evidence type="ECO:0000312" key="51">
    <source>
        <dbReference type="HGNC" id="HGNC:4195"/>
    </source>
</evidence>
<evidence type="ECO:0007744" key="52">
    <source>
        <dbReference type="PDB" id="3F9M"/>
    </source>
</evidence>
<evidence type="ECO:0007744" key="53">
    <source>
        <dbReference type="PDB" id="3FGU"/>
    </source>
</evidence>
<evidence type="ECO:0007744" key="54">
    <source>
        <dbReference type="PDB" id="3ID8"/>
    </source>
</evidence>
<evidence type="ECO:0007744" key="55">
    <source>
        <dbReference type="PDB" id="3IDH"/>
    </source>
</evidence>
<evidence type="ECO:0007744" key="56">
    <source>
        <dbReference type="PDB" id="4NO7"/>
    </source>
</evidence>
<evidence type="ECO:0007829" key="57">
    <source>
        <dbReference type="PDB" id="3F9M"/>
    </source>
</evidence>
<evidence type="ECO:0007829" key="58">
    <source>
        <dbReference type="PDB" id="3H1V"/>
    </source>
</evidence>
<evidence type="ECO:0007829" key="59">
    <source>
        <dbReference type="PDB" id="3QIC"/>
    </source>
</evidence>
<evidence type="ECO:0007829" key="60">
    <source>
        <dbReference type="PDB" id="3VEV"/>
    </source>
</evidence>
<evidence type="ECO:0007829" key="61">
    <source>
        <dbReference type="PDB" id="4ISE"/>
    </source>
</evidence>
<evidence type="ECO:0007829" key="62">
    <source>
        <dbReference type="PDB" id="4LC9"/>
    </source>
</evidence>
<evidence type="ECO:0007829" key="63">
    <source>
        <dbReference type="PDB" id="4MLH"/>
    </source>
</evidence>
<sequence>MLDDRARMEAAKKEKVEQILAEFQLQEEDLKKVMRRMQKEMDRGLRLETHEEASVKMLPTYVRSTPEGSEVGDFLSLDLGGTNFRVMLVKVGEGEEGQWSVKTKHQMYSIPEDAMTGTAEMLFDYISECISDFLDKHQMKHKKLPLGFTFSFPVRHEDIDKGILLNWTKGFKASGAEGNNVVGLLRDAIKRRGDFEMDVVAMVNDTVATMISCYYEDHQCEVGMIVGTGCNACYMEEMQNVELVEGDEGRMCVNTEWGAFGDSGELDEFLLEYDRLVDESSANPGQQLYEKLIGGKYMGELVRLVLLRLVDENLLFHGEASEQLRTRGAFETRFVSQVESDTGDRKQIYNILSTLGLRPSTTDCDIVRRACESVSTRAAHMCSAGLAGVINRMRESRSEDVMRITVGVDGSVYKLHPSFKERFHASVRRLTPSCEITFIESEEGSGRGAALVSAVACKKACMLGQ</sequence>
<accession>P35557</accession>
<accession>A4D2J2</accession>
<accession>A4D2J3</accession>
<accession>Q05810</accession>
<protein>
    <recommendedName>
        <fullName evidence="48">Hexokinase-4</fullName>
        <shortName evidence="48">HK4</shortName>
        <ecNumber evidence="10 17 19 21 23 32 36">2.7.1.1</ecNumber>
    </recommendedName>
    <alternativeName>
        <fullName evidence="45">Glucokinase</fullName>
    </alternativeName>
    <alternativeName>
        <fullName evidence="1">Hexokinase type IV</fullName>
        <shortName evidence="1">HK IV</shortName>
    </alternativeName>
    <alternativeName>
        <fullName evidence="1">Hexokinase-D</fullName>
    </alternativeName>
</protein>